<reference key="1">
    <citation type="journal article" date="1998" name="Biochem. Biophys. Res. Commun.">
        <title>TGF-beta-activated kinase 1 stimulates NF-kappa B activation by an NF-kappa B-inducing kinase-independent mechanism.</title>
        <authorList>
            <person name="Sakurai H."/>
            <person name="Shigemori N."/>
            <person name="Hasegawa K."/>
            <person name="Sugita T."/>
        </authorList>
    </citation>
    <scope>NUCLEOTIDE SEQUENCE [MRNA] (ISOFORMS 1A; 1B AND 1C)</scope>
    <source>
        <tissue>Lung</tissue>
    </source>
</reference>
<reference key="2">
    <citation type="journal article" date="2000" name="Biochim. Biophys. Acta">
        <title>Alternative splicing and gene structure of the transforming growth factor beta-activated kinase 1.</title>
        <authorList>
            <person name="Dempsey C.E."/>
            <person name="Sakurai H."/>
            <person name="Sugita T."/>
            <person name="Guesdon F."/>
        </authorList>
    </citation>
    <scope>NUCLEOTIDE SEQUENCE [MRNA] (ISOFORM 1D)</scope>
    <scope>TISSUE SPECIFICITY</scope>
</reference>
<reference key="3">
    <citation type="submission" date="2005-12" db="EMBL/GenBank/DDBJ databases">
        <authorList>
            <consortium name="NHLBI resequencing and genotyping service (RS&amp;G)"/>
        </authorList>
    </citation>
    <scope>NUCLEOTIDE SEQUENCE [GENOMIC DNA]</scope>
</reference>
<reference key="4">
    <citation type="journal article" date="2004" name="Nat. Genet.">
        <title>Complete sequencing and characterization of 21,243 full-length human cDNAs.</title>
        <authorList>
            <person name="Ota T."/>
            <person name="Suzuki Y."/>
            <person name="Nishikawa T."/>
            <person name="Otsuki T."/>
            <person name="Sugiyama T."/>
            <person name="Irie R."/>
            <person name="Wakamatsu A."/>
            <person name="Hayashi K."/>
            <person name="Sato H."/>
            <person name="Nagai K."/>
            <person name="Kimura K."/>
            <person name="Makita H."/>
            <person name="Sekine M."/>
            <person name="Obayashi M."/>
            <person name="Nishi T."/>
            <person name="Shibahara T."/>
            <person name="Tanaka T."/>
            <person name="Ishii S."/>
            <person name="Yamamoto J."/>
            <person name="Saito K."/>
            <person name="Kawai Y."/>
            <person name="Isono Y."/>
            <person name="Nakamura Y."/>
            <person name="Nagahari K."/>
            <person name="Murakami K."/>
            <person name="Yasuda T."/>
            <person name="Iwayanagi T."/>
            <person name="Wagatsuma M."/>
            <person name="Shiratori A."/>
            <person name="Sudo H."/>
            <person name="Hosoiri T."/>
            <person name="Kaku Y."/>
            <person name="Kodaira H."/>
            <person name="Kondo H."/>
            <person name="Sugawara M."/>
            <person name="Takahashi M."/>
            <person name="Kanda K."/>
            <person name="Yokoi T."/>
            <person name="Furuya T."/>
            <person name="Kikkawa E."/>
            <person name="Omura Y."/>
            <person name="Abe K."/>
            <person name="Kamihara K."/>
            <person name="Katsuta N."/>
            <person name="Sato K."/>
            <person name="Tanikawa M."/>
            <person name="Yamazaki M."/>
            <person name="Ninomiya K."/>
            <person name="Ishibashi T."/>
            <person name="Yamashita H."/>
            <person name="Murakawa K."/>
            <person name="Fujimori K."/>
            <person name="Tanai H."/>
            <person name="Kimata M."/>
            <person name="Watanabe M."/>
            <person name="Hiraoka S."/>
            <person name="Chiba Y."/>
            <person name="Ishida S."/>
            <person name="Ono Y."/>
            <person name="Takiguchi S."/>
            <person name="Watanabe S."/>
            <person name="Yosida M."/>
            <person name="Hotuta T."/>
            <person name="Kusano J."/>
            <person name="Kanehori K."/>
            <person name="Takahashi-Fujii A."/>
            <person name="Hara H."/>
            <person name="Tanase T.-O."/>
            <person name="Nomura Y."/>
            <person name="Togiya S."/>
            <person name="Komai F."/>
            <person name="Hara R."/>
            <person name="Takeuchi K."/>
            <person name="Arita M."/>
            <person name="Imose N."/>
            <person name="Musashino K."/>
            <person name="Yuuki H."/>
            <person name="Oshima A."/>
            <person name="Sasaki N."/>
            <person name="Aotsuka S."/>
            <person name="Yoshikawa Y."/>
            <person name="Matsunawa H."/>
            <person name="Ichihara T."/>
            <person name="Shiohata N."/>
            <person name="Sano S."/>
            <person name="Moriya S."/>
            <person name="Momiyama H."/>
            <person name="Satoh N."/>
            <person name="Takami S."/>
            <person name="Terashima Y."/>
            <person name="Suzuki O."/>
            <person name="Nakagawa S."/>
            <person name="Senoh A."/>
            <person name="Mizoguchi H."/>
            <person name="Goto Y."/>
            <person name="Shimizu F."/>
            <person name="Wakebe H."/>
            <person name="Hishigaki H."/>
            <person name="Watanabe T."/>
            <person name="Sugiyama A."/>
            <person name="Takemoto M."/>
            <person name="Kawakami B."/>
            <person name="Yamazaki M."/>
            <person name="Watanabe K."/>
            <person name="Kumagai A."/>
            <person name="Itakura S."/>
            <person name="Fukuzumi Y."/>
            <person name="Fujimori Y."/>
            <person name="Komiyama M."/>
            <person name="Tashiro H."/>
            <person name="Tanigami A."/>
            <person name="Fujiwara T."/>
            <person name="Ono T."/>
            <person name="Yamada K."/>
            <person name="Fujii Y."/>
            <person name="Ozaki K."/>
            <person name="Hirao M."/>
            <person name="Ohmori Y."/>
            <person name="Kawabata A."/>
            <person name="Hikiji T."/>
            <person name="Kobatake N."/>
            <person name="Inagaki H."/>
            <person name="Ikema Y."/>
            <person name="Okamoto S."/>
            <person name="Okitani R."/>
            <person name="Kawakami T."/>
            <person name="Noguchi S."/>
            <person name="Itoh T."/>
            <person name="Shigeta K."/>
            <person name="Senba T."/>
            <person name="Matsumura K."/>
            <person name="Nakajima Y."/>
            <person name="Mizuno T."/>
            <person name="Morinaga M."/>
            <person name="Sasaki M."/>
            <person name="Togashi T."/>
            <person name="Oyama M."/>
            <person name="Hata H."/>
            <person name="Watanabe M."/>
            <person name="Komatsu T."/>
            <person name="Mizushima-Sugano J."/>
            <person name="Satoh T."/>
            <person name="Shirai Y."/>
            <person name="Takahashi Y."/>
            <person name="Nakagawa K."/>
            <person name="Okumura K."/>
            <person name="Nagase T."/>
            <person name="Nomura N."/>
            <person name="Kikuchi H."/>
            <person name="Masuho Y."/>
            <person name="Yamashita R."/>
            <person name="Nakai K."/>
            <person name="Yada T."/>
            <person name="Nakamura Y."/>
            <person name="Ohara O."/>
            <person name="Isogai T."/>
            <person name="Sugano S."/>
        </authorList>
    </citation>
    <scope>NUCLEOTIDE SEQUENCE [LARGE SCALE MRNA] (ISOFORM 1A)</scope>
    <source>
        <tissue>Trachea</tissue>
    </source>
</reference>
<reference key="5">
    <citation type="journal article" date="2003" name="Nature">
        <title>The DNA sequence and analysis of human chromosome 6.</title>
        <authorList>
            <person name="Mungall A.J."/>
            <person name="Palmer S.A."/>
            <person name="Sims S.K."/>
            <person name="Edwards C.A."/>
            <person name="Ashurst J.L."/>
            <person name="Wilming L."/>
            <person name="Jones M.C."/>
            <person name="Horton R."/>
            <person name="Hunt S.E."/>
            <person name="Scott C.E."/>
            <person name="Gilbert J.G.R."/>
            <person name="Clamp M.E."/>
            <person name="Bethel G."/>
            <person name="Milne S."/>
            <person name="Ainscough R."/>
            <person name="Almeida J.P."/>
            <person name="Ambrose K.D."/>
            <person name="Andrews T.D."/>
            <person name="Ashwell R.I.S."/>
            <person name="Babbage A.K."/>
            <person name="Bagguley C.L."/>
            <person name="Bailey J."/>
            <person name="Banerjee R."/>
            <person name="Barker D.J."/>
            <person name="Barlow K.F."/>
            <person name="Bates K."/>
            <person name="Beare D.M."/>
            <person name="Beasley H."/>
            <person name="Beasley O."/>
            <person name="Bird C.P."/>
            <person name="Blakey S.E."/>
            <person name="Bray-Allen S."/>
            <person name="Brook J."/>
            <person name="Brown A.J."/>
            <person name="Brown J.Y."/>
            <person name="Burford D.C."/>
            <person name="Burrill W."/>
            <person name="Burton J."/>
            <person name="Carder C."/>
            <person name="Carter N.P."/>
            <person name="Chapman J.C."/>
            <person name="Clark S.Y."/>
            <person name="Clark G."/>
            <person name="Clee C.M."/>
            <person name="Clegg S."/>
            <person name="Cobley V."/>
            <person name="Collier R.E."/>
            <person name="Collins J.E."/>
            <person name="Colman L.K."/>
            <person name="Corby N.R."/>
            <person name="Coville G.J."/>
            <person name="Culley K.M."/>
            <person name="Dhami P."/>
            <person name="Davies J."/>
            <person name="Dunn M."/>
            <person name="Earthrowl M.E."/>
            <person name="Ellington A.E."/>
            <person name="Evans K.A."/>
            <person name="Faulkner L."/>
            <person name="Francis M.D."/>
            <person name="Frankish A."/>
            <person name="Frankland J."/>
            <person name="French L."/>
            <person name="Garner P."/>
            <person name="Garnett J."/>
            <person name="Ghori M.J."/>
            <person name="Gilby L.M."/>
            <person name="Gillson C.J."/>
            <person name="Glithero R.J."/>
            <person name="Grafham D.V."/>
            <person name="Grant M."/>
            <person name="Gribble S."/>
            <person name="Griffiths C."/>
            <person name="Griffiths M.N.D."/>
            <person name="Hall R."/>
            <person name="Halls K.S."/>
            <person name="Hammond S."/>
            <person name="Harley J.L."/>
            <person name="Hart E.A."/>
            <person name="Heath P.D."/>
            <person name="Heathcott R."/>
            <person name="Holmes S.J."/>
            <person name="Howden P.J."/>
            <person name="Howe K.L."/>
            <person name="Howell G.R."/>
            <person name="Huckle E."/>
            <person name="Humphray S.J."/>
            <person name="Humphries M.D."/>
            <person name="Hunt A.R."/>
            <person name="Johnson C.M."/>
            <person name="Joy A.A."/>
            <person name="Kay M."/>
            <person name="Keenan S.J."/>
            <person name="Kimberley A.M."/>
            <person name="King A."/>
            <person name="Laird G.K."/>
            <person name="Langford C."/>
            <person name="Lawlor S."/>
            <person name="Leongamornlert D.A."/>
            <person name="Leversha M."/>
            <person name="Lloyd C.R."/>
            <person name="Lloyd D.M."/>
            <person name="Loveland J.E."/>
            <person name="Lovell J."/>
            <person name="Martin S."/>
            <person name="Mashreghi-Mohammadi M."/>
            <person name="Maslen G.L."/>
            <person name="Matthews L."/>
            <person name="McCann O.T."/>
            <person name="McLaren S.J."/>
            <person name="McLay K."/>
            <person name="McMurray A."/>
            <person name="Moore M.J.F."/>
            <person name="Mullikin J.C."/>
            <person name="Niblett D."/>
            <person name="Nickerson T."/>
            <person name="Novik K.L."/>
            <person name="Oliver K."/>
            <person name="Overton-Larty E.K."/>
            <person name="Parker A."/>
            <person name="Patel R."/>
            <person name="Pearce A.V."/>
            <person name="Peck A.I."/>
            <person name="Phillimore B.J.C.T."/>
            <person name="Phillips S."/>
            <person name="Plumb R.W."/>
            <person name="Porter K.M."/>
            <person name="Ramsey Y."/>
            <person name="Ranby S.A."/>
            <person name="Rice C.M."/>
            <person name="Ross M.T."/>
            <person name="Searle S.M."/>
            <person name="Sehra H.K."/>
            <person name="Sheridan E."/>
            <person name="Skuce C.D."/>
            <person name="Smith S."/>
            <person name="Smith M."/>
            <person name="Spraggon L."/>
            <person name="Squares S.L."/>
            <person name="Steward C.A."/>
            <person name="Sycamore N."/>
            <person name="Tamlyn-Hall G."/>
            <person name="Tester J."/>
            <person name="Theaker A.J."/>
            <person name="Thomas D.W."/>
            <person name="Thorpe A."/>
            <person name="Tracey A."/>
            <person name="Tromans A."/>
            <person name="Tubby B."/>
            <person name="Wall M."/>
            <person name="Wallis J.M."/>
            <person name="West A.P."/>
            <person name="White S.S."/>
            <person name="Whitehead S.L."/>
            <person name="Whittaker H."/>
            <person name="Wild A."/>
            <person name="Willey D.J."/>
            <person name="Wilmer T.E."/>
            <person name="Wood J.M."/>
            <person name="Wray P.W."/>
            <person name="Wyatt J.C."/>
            <person name="Young L."/>
            <person name="Younger R.M."/>
            <person name="Bentley D.R."/>
            <person name="Coulson A."/>
            <person name="Durbin R.M."/>
            <person name="Hubbard T."/>
            <person name="Sulston J.E."/>
            <person name="Dunham I."/>
            <person name="Rogers J."/>
            <person name="Beck S."/>
        </authorList>
    </citation>
    <scope>NUCLEOTIDE SEQUENCE [LARGE SCALE GENOMIC DNA]</scope>
</reference>
<reference key="6">
    <citation type="submission" date="2005-09" db="EMBL/GenBank/DDBJ databases">
        <authorList>
            <person name="Mural R.J."/>
            <person name="Istrail S."/>
            <person name="Sutton G.G."/>
            <person name="Florea L."/>
            <person name="Halpern A.L."/>
            <person name="Mobarry C.M."/>
            <person name="Lippert R."/>
            <person name="Walenz B."/>
            <person name="Shatkay H."/>
            <person name="Dew I."/>
            <person name="Miller J.R."/>
            <person name="Flanigan M.J."/>
            <person name="Edwards N.J."/>
            <person name="Bolanos R."/>
            <person name="Fasulo D."/>
            <person name="Halldorsson B.V."/>
            <person name="Hannenhalli S."/>
            <person name="Turner R."/>
            <person name="Yooseph S."/>
            <person name="Lu F."/>
            <person name="Nusskern D.R."/>
            <person name="Shue B.C."/>
            <person name="Zheng X.H."/>
            <person name="Zhong F."/>
            <person name="Delcher A.L."/>
            <person name="Huson D.H."/>
            <person name="Kravitz S.A."/>
            <person name="Mouchard L."/>
            <person name="Reinert K."/>
            <person name="Remington K.A."/>
            <person name="Clark A.G."/>
            <person name="Waterman M.S."/>
            <person name="Eichler E.E."/>
            <person name="Adams M.D."/>
            <person name="Hunkapiller M.W."/>
            <person name="Myers E.W."/>
            <person name="Venter J.C."/>
        </authorList>
    </citation>
    <scope>NUCLEOTIDE SEQUENCE [LARGE SCALE GENOMIC DNA]</scope>
</reference>
<reference key="7">
    <citation type="journal article" date="2004" name="Genome Res.">
        <title>The status, quality, and expansion of the NIH full-length cDNA project: the Mammalian Gene Collection (MGC).</title>
        <authorList>
            <consortium name="The MGC Project Team"/>
        </authorList>
    </citation>
    <scope>NUCLEOTIDE SEQUENCE [LARGE SCALE MRNA] (ISOFORM 1A)</scope>
    <source>
        <tissue>Uterus</tissue>
    </source>
</reference>
<reference key="8">
    <citation type="journal article" date="1996" name="J. Biol. Chem.">
        <title>A novel kinase cascade mediated by mitogen-activated protein kinase kinase 6 and MKK3.</title>
        <authorList>
            <person name="Moriguchi T."/>
            <person name="Kuroyanagi N."/>
            <person name="Yamaguchi K."/>
            <person name="Gotoh Y."/>
            <person name="Irie K."/>
            <person name="Kano T."/>
            <person name="Shirakabe K."/>
            <person name="Muro Y."/>
            <person name="Shibuya H."/>
            <person name="Matsumoto K."/>
            <person name="Nishida E."/>
            <person name="Hagiwara M."/>
        </authorList>
    </citation>
    <scope>FUNCTION IN PHOSPHORYLATION OF MAP2K3/MKK3 AND MAP2K6/MKK6</scope>
</reference>
<reference key="9">
    <citation type="journal article" date="1996" name="Science">
        <title>TAB1: an activator of the TAK1 MAPKKK in TGF-beta signal transduction.</title>
        <authorList>
            <person name="Shibuya H."/>
            <person name="Yamaguchi K."/>
            <person name="Shirakabe K."/>
            <person name="Tonegawa A."/>
            <person name="Gotoh Y."/>
            <person name="Ueno N."/>
            <person name="Irie K."/>
            <person name="Nishida E."/>
            <person name="Matsumoto K."/>
        </authorList>
    </citation>
    <scope>INTERACTION WITH TAB1/MAP3K7IP1</scope>
</reference>
<reference key="10">
    <citation type="journal article" date="1997" name="J. Biol. Chem.">
        <title>TAK1 mediates the ceramide signaling to stress-activated protein kinase/c-Jun N-terminal kinase.</title>
        <authorList>
            <person name="Shirakabe K."/>
            <person name="Yamaguchi K."/>
            <person name="Shibuya H."/>
            <person name="Irie K."/>
            <person name="Matsuda S."/>
            <person name="Moriguchi T."/>
            <person name="Gotoh Y."/>
            <person name="Matsumoto K."/>
            <person name="Nishida E."/>
        </authorList>
    </citation>
    <scope>ACTIVITY REGULATION</scope>
    <scope>FUNCTION</scope>
</reference>
<reference key="11">
    <citation type="journal article" date="1999" name="Nature">
        <title>The kinase TAK1 can activate the NIK-I kappaB as well as the MAP kinase cascade in the IL-1 signalling pathway.</title>
        <authorList>
            <person name="Ninomiya-Tsuji J."/>
            <person name="Kishimoto K."/>
            <person name="Hiyama A."/>
            <person name="Inoue J."/>
            <person name="Cao Z."/>
            <person name="Matsumoto K."/>
        </authorList>
    </citation>
    <scope>INTERACTION WITH TRAF6 AND TAB1/MAP3K7IP1</scope>
    <scope>FUNCTION</scope>
    <scope>CATALYTIC ACTIVITY</scope>
</reference>
<reference key="12">
    <citation type="journal article" date="2000" name="FEBS Lett.">
        <title>Phosphorylation-dependent activation of TAK1 mitogen-activated protein kinase kinase kinase by TAB1.</title>
        <authorList>
            <person name="Sakurai H."/>
            <person name="Miyoshi H."/>
            <person name="Mizukami J."/>
            <person name="Sugita T."/>
        </authorList>
    </citation>
    <scope>INTERACTION WITH TAB1</scope>
    <scope>PHOSPHORYLATION AT THR-184; THR-187 AND SER-192</scope>
    <scope>ACTIVATION</scope>
    <scope>CATALYTIC ACTIVITY</scope>
</reference>
<reference key="13">
    <citation type="journal article" date="2000" name="J. Biol. Chem.">
        <title>TAK1 mitogen-activated protein kinase kinase kinase is activated by autophosphorylation within its activation loop.</title>
        <authorList>
            <person name="Kishimoto K."/>
            <person name="Matsumoto K."/>
            <person name="Ninomiya-Tsuji J."/>
        </authorList>
    </citation>
    <scope>PHOSPHORYLATION AT SER-192</scope>
    <scope>ACTIVITY REGULATION</scope>
</reference>
<reference key="14">
    <citation type="journal article" date="2001" name="J. Biol. Chem.">
        <title>Regulation of the TAK1 signaling pathway by protein phosphatase 2C.</title>
        <authorList>
            <person name="Hanada M."/>
            <person name="Ninomiya-Tsuji J."/>
            <person name="Komaki K."/>
            <person name="Ohnishi M."/>
            <person name="Katsura K."/>
            <person name="Kanamaru R."/>
            <person name="Matsumoto K."/>
            <person name="Tamura S."/>
        </authorList>
    </citation>
    <scope>ACTIVITY REGULATION</scope>
    <scope>DEPHOSPHORYLATION BY PPM1B/PP2CB</scope>
    <scope>INTERACTION WITH PPM1B/PP2CB</scope>
</reference>
<reference key="15">
    <citation type="journal article" date="2001" name="Nature">
        <title>TAK1 is a ubiquitin-dependent kinase of MKK and IKK.</title>
        <authorList>
            <person name="Wang C."/>
            <person name="Deng L."/>
            <person name="Hong M."/>
            <person name="Akkaraju G.R."/>
            <person name="Inoue J."/>
            <person name="Chen Z.J."/>
        </authorList>
    </citation>
    <scope>UBIQUITINATION</scope>
    <scope>FUNCTION</scope>
    <scope>ACTIVITY REGULATION</scope>
    <scope>INTERACTION WITH TAB1/MAP3K7IP2 AND TAB2/MAP3K7IP2</scope>
    <scope>IDENTIFICATION IN THE TRIKA2 COMPLEX</scope>
</reference>
<reference key="16">
    <citation type="journal article" date="2002" name="Mol. Cell. Biol.">
        <title>Interleukin-1 (IL-1) receptor-associated kinase-dependent IL-1-induced signaling complexes phosphorylate TAK1 and TAB2 at the plasma membrane and activate TAK1 in the cytosol.</title>
        <authorList>
            <person name="Jiang Z."/>
            <person name="Ninomiya-Tsuji J."/>
            <person name="Qian Y."/>
            <person name="Matsumoto K."/>
            <person name="Li X."/>
        </authorList>
    </citation>
    <scope>INTERACTION WITH IRAK; TAB1/MAP3K7IP1; TAB2/MAP3K7IP2 AND TRAF6</scope>
    <scope>PHOSPHORYLATION</scope>
    <scope>ACTIVITY REGULATION</scope>
    <scope>SUBCELLULAR LOCATION</scope>
</reference>
<reference key="17">
    <citation type="journal article" date="2003" name="FEBS Lett.">
        <title>Pellino2 activates the mitogen activated protein kinase pathway.</title>
        <authorList>
            <person name="Jensen L.E."/>
            <person name="Whitehead A.S."/>
        </authorList>
    </citation>
    <scope>INTERACTION WITH PELI1 AND PELI2</scope>
</reference>
<reference key="18">
    <citation type="journal article" date="2003" name="J. Immunol.">
        <title>Pellino3, a novel member of the Pellino protein family, promotes activation of c-Jun and Elk-1 and may act as a scaffolding protein.</title>
        <authorList>
            <person name="Jensen L.E."/>
            <person name="Whitehead A.S."/>
        </authorList>
    </citation>
    <scope>INTERACTION WITH PELI3</scope>
</reference>
<reference key="19">
    <citation type="journal article" date="2003" name="Mol. Biol. Cell">
        <title>Transforming growth factor-beta1 (TGF-beta)-induced apoptosis of prostate cancer cells involves Smad7-dependent activation of p38 by TGF-beta-activated kinase 1 and mitogen-activated protein kinase kinase 3.</title>
        <authorList>
            <person name="Edlund S."/>
            <person name="Bu S."/>
            <person name="Schuster N."/>
            <person name="Aspenstroem P."/>
            <person name="Heuchel R."/>
            <person name="Heldin N.E."/>
            <person name="ten Dijke P."/>
            <person name="Heldin C.H."/>
            <person name="Landstrom M."/>
        </authorList>
    </citation>
    <scope>FUNCTION</scope>
    <scope>INTERACTION WITH SMAD7; MAP2K3 AND P38 KINASE</scope>
    <scope>MUTAGENESIS OF LYS-63</scope>
    <scope>CATALYTIC ACTIVITY</scope>
</reference>
<reference key="20">
    <citation type="journal article" date="2004" name="Biochem. J.">
        <title>TAB3, a new binding partner of the protein kinase TAK1.</title>
        <authorList>
            <person name="Cheung P.C."/>
            <person name="Nebreda A.R."/>
            <person name="Cohen P."/>
        </authorList>
    </citation>
    <scope>INTERACTION WITH TAB3/MAP3K7IP3</scope>
</reference>
<reference key="21">
    <citation type="journal article" date="2005" name="J. Biol. Chem.">
        <title>Disabled-2 (Dab2) mediates transforming growth factor beta (TGFbeta)-stimulated fibronectin synthesis through TGFbeta-activated kinase 1 and activation of the JNK pathway.</title>
        <authorList>
            <person name="Hocevar B.A."/>
            <person name="Prunier C."/>
            <person name="Howe P.H."/>
        </authorList>
    </citation>
    <scope>INTERACTION WITH DAB2</scope>
</reference>
<reference key="22">
    <citation type="journal article" date="2006" name="Cell">
        <title>Global, in vivo, and site-specific phosphorylation dynamics in signaling networks.</title>
        <authorList>
            <person name="Olsen J.V."/>
            <person name="Blagoev B."/>
            <person name="Gnad F."/>
            <person name="Macek B."/>
            <person name="Kumar C."/>
            <person name="Mortensen P."/>
            <person name="Mann M."/>
        </authorList>
    </citation>
    <scope>PHOSPHORYLATION [LARGE SCALE ANALYSIS] AT SER-439</scope>
    <scope>IDENTIFICATION BY MASS SPECTROMETRY [LARGE SCALE ANALYSIS]</scope>
    <source>
        <tissue>Cervix carcinoma</tissue>
    </source>
</reference>
<reference key="23">
    <citation type="journal article" date="2006" name="EMBO Rep.">
        <title>The Yersinia enterocolitica effector YopP inhibits host cell signalling by inactivating the protein kinase TAK1 in the IL-1 signalling pathway.</title>
        <authorList>
            <person name="Thiefes A."/>
            <person name="Wolf A."/>
            <person name="Doerrie A."/>
            <person name="Grassl G.A."/>
            <person name="Matsumoto K."/>
            <person name="Autenrieth I."/>
            <person name="Bohn E."/>
            <person name="Sakurai H."/>
            <person name="Niedenthal R."/>
            <person name="Resch K."/>
            <person name="Kracht M."/>
        </authorList>
    </citation>
    <scope>UBIQUITINATION</scope>
    <scope>PHOSPHORYLATION AT THR-187 BY AUTOCATALYSIS</scope>
    <scope>SUBUNIT</scope>
    <scope>FUNCTION</scope>
</reference>
<reference key="24">
    <citation type="journal article" date="2006" name="J. Biol. Chem.">
        <title>Osmotic stress activates the TAK1-JNK pathway while blocking TAK1-mediated NF-kappaB activation: TAO2 regulates TAK1 pathways.</title>
        <authorList>
            <person name="Huangfu W.C."/>
            <person name="Omori E."/>
            <person name="Akira S."/>
            <person name="Matsumoto K."/>
            <person name="Ninomiya-Tsuji J."/>
        </authorList>
    </citation>
    <scope>FUNCTION</scope>
    <scope>ACTIVITY REGULATION</scope>
    <scope>INTERACTION WITH TAOK1 AND TAOK2</scope>
</reference>
<reference key="25">
    <citation type="journal article" date="2006" name="J. Biol. Chem.">
        <title>Protein phosphatase 6 down-regulates TAK1 kinase activation in the IL-1 signaling pathway.</title>
        <authorList>
            <person name="Kajino T."/>
            <person name="Ren H."/>
            <person name="Iemura S."/>
            <person name="Natsume T."/>
            <person name="Stefansson B."/>
            <person name="Brautigan D.L."/>
            <person name="Matsumoto K."/>
            <person name="Ninomiya-Tsuji J."/>
        </authorList>
    </citation>
    <scope>ACTIVITY REGULATION</scope>
    <scope>INTERACTION WITH PP2A AND PPP6C</scope>
    <scope>DEPHOSPHORYLATION AT THR-187 BY PP2A AND PPP6C</scope>
</reference>
<reference key="26">
    <citation type="journal article" date="2007" name="J. Biol. Chem.">
        <title>RBCK1 negatively regulates tumor necrosis factor- and interleukin-1-triggered NF-kappaB activation by targeting TAB2/3 for degradation.</title>
        <authorList>
            <person name="Tian Y."/>
            <person name="Zhang Y."/>
            <person name="Zhong B."/>
            <person name="Wang Y.Y."/>
            <person name="Diao F.C."/>
            <person name="Wang R.P."/>
            <person name="Zhang M."/>
            <person name="Chen D.Y."/>
            <person name="Zhai Z.H."/>
            <person name="Shu H.B."/>
        </authorList>
    </citation>
    <scope>INTERACTION WITH RBCK1</scope>
</reference>
<reference key="27">
    <citation type="journal article" date="2007" name="J. Exp. Med.">
        <title>Deubiquitinating enzyme CYLD negatively regulates the ubiquitin-dependent kinase Tak1 and prevents abnormal T cell responses.</title>
        <authorList>
            <person name="Reiley W.W."/>
            <person name="Jin W."/>
            <person name="Lee A.J."/>
            <person name="Wright A."/>
            <person name="Wu X."/>
            <person name="Tewalt E.F."/>
            <person name="Leonard T.O."/>
            <person name="Norbury C.C."/>
            <person name="Fitzpatrick L."/>
            <person name="Zhang M."/>
            <person name="Sun S.C."/>
        </authorList>
    </citation>
    <scope>UBIQUITINATION</scope>
    <scope>INTERACTION WITH CYLD</scope>
    <scope>DEUBIQUITINATION BY CYLD</scope>
</reference>
<reference key="28">
    <citation type="journal article" date="2008" name="J. Proteome Res.">
        <title>Phosphoproteome of resting human platelets.</title>
        <authorList>
            <person name="Zahedi R.P."/>
            <person name="Lewandrowski U."/>
            <person name="Wiesner J."/>
            <person name="Wortelkamp S."/>
            <person name="Moebius J."/>
            <person name="Schuetz C."/>
            <person name="Walter U."/>
            <person name="Gambaryan S."/>
            <person name="Sickmann A."/>
        </authorList>
    </citation>
    <scope>PHOSPHORYLATION [LARGE SCALE ANALYSIS] AT SER-439</scope>
    <scope>IDENTIFICATION BY MASS SPECTROMETRY [LARGE SCALE ANALYSIS]</scope>
    <source>
        <tissue>Platelet</tissue>
    </source>
</reference>
<reference key="29">
    <citation type="journal article" date="2008" name="Mol. Cell">
        <title>Kinase-selective enrichment enables quantitative phosphoproteomics of the kinome across the cell cycle.</title>
        <authorList>
            <person name="Daub H."/>
            <person name="Olsen J.V."/>
            <person name="Bairlein M."/>
            <person name="Gnad F."/>
            <person name="Oppermann F.S."/>
            <person name="Korner R."/>
            <person name="Greff Z."/>
            <person name="Keri G."/>
            <person name="Stemmann O."/>
            <person name="Mann M."/>
        </authorList>
    </citation>
    <scope>PHOSPHORYLATION [LARGE SCALE ANALYSIS] AT SER-439</scope>
    <scope>IDENTIFICATION BY MASS SPECTROMETRY [LARGE SCALE ANALYSIS]</scope>
    <source>
        <tissue>Cervix carcinoma</tissue>
    </source>
</reference>
<reference key="30">
    <citation type="journal article" date="2008" name="Nat. Cell Biol.">
        <title>The type I TGF-beta receptor engages TRAF6 to activate TAK1 in a receptor kinase-independent manner.</title>
        <authorList>
            <person name="Sorrentino A."/>
            <person name="Thakur N."/>
            <person name="Grimsby S."/>
            <person name="Marcusson A."/>
            <person name="von Bulow V."/>
            <person name="Schuster N."/>
            <person name="Zhang S."/>
            <person name="Heldin C.H."/>
            <person name="Landstrom M."/>
        </authorList>
    </citation>
    <scope>INTERACTION WITH TGFBR1</scope>
</reference>
<reference key="31">
    <citation type="journal article" date="2008" name="PLoS ONE">
        <title>Modulation of interleukin-1 transcriptional response by the interaction between VRK2 and the JIP1 scaffold protein.</title>
        <authorList>
            <person name="Blanco S."/>
            <person name="Sanz-Garcia M."/>
            <person name="Santos C.R."/>
            <person name="Lazo P.A."/>
        </authorList>
    </citation>
    <scope>INTERACTION WITH VRK2</scope>
</reference>
<reference key="32">
    <citation type="journal article" date="2008" name="Proc. Natl. Acad. Sci. U.S.A.">
        <title>A quantitative atlas of mitotic phosphorylation.</title>
        <authorList>
            <person name="Dephoure N."/>
            <person name="Zhou C."/>
            <person name="Villen J."/>
            <person name="Beausoleil S.A."/>
            <person name="Bakalarski C.E."/>
            <person name="Elledge S.J."/>
            <person name="Gygi S.P."/>
        </authorList>
    </citation>
    <scope>PHOSPHORYLATION [LARGE SCALE ANALYSIS] AT SER-389 AND SER-439</scope>
    <scope>IDENTIFICATION BY MASS SPECTROMETRY [LARGE SCALE ANALYSIS]</scope>
    <source>
        <tissue>Cervix carcinoma</tissue>
    </source>
</reference>
<reference key="33">
    <citation type="journal article" date="2009" name="Anal. Chem.">
        <title>Lys-N and trypsin cover complementary parts of the phosphoproteome in a refined SCX-based approach.</title>
        <authorList>
            <person name="Gauci S."/>
            <person name="Helbig A.O."/>
            <person name="Slijper M."/>
            <person name="Krijgsveld J."/>
            <person name="Heck A.J."/>
            <person name="Mohammed S."/>
        </authorList>
    </citation>
    <scope>IDENTIFICATION BY MASS SPECTROMETRY [LARGE SCALE ANALYSIS]</scope>
</reference>
<reference key="34">
    <citation type="journal article" date="2009" name="Cell. Mol. Life Sci.">
        <title>WDR34 is a novel TAK1-associated suppressor of the IL-1R/TLR3/TLR4-induced NF-kappaB activation pathway.</title>
        <authorList>
            <person name="Gao D."/>
            <person name="Wang R."/>
            <person name="Li B."/>
            <person name="Yang Y."/>
            <person name="Zhai Z."/>
            <person name="Chen D.Y."/>
        </authorList>
    </citation>
    <scope>INTERACTION WITH DYNC2I2</scope>
</reference>
<reference key="35">
    <citation type="journal article" date="2009" name="Mol. Cell. Proteomics">
        <title>Large-scale proteomics analysis of the human kinome.</title>
        <authorList>
            <person name="Oppermann F.S."/>
            <person name="Gnad F."/>
            <person name="Olsen J.V."/>
            <person name="Hornberger R."/>
            <person name="Greff Z."/>
            <person name="Keri G."/>
            <person name="Mann M."/>
            <person name="Daub H."/>
        </authorList>
    </citation>
    <scope>PHOSPHORYLATION [LARGE SCALE ANALYSIS] AT SER-389 AND SER-439</scope>
    <scope>IDENTIFICATION BY MASS SPECTROMETRY [LARGE SCALE ANALYSIS]</scope>
</reference>
<reference key="36">
    <citation type="journal article" date="2009" name="Nature">
        <title>Direct activation of protein kinases by unanchored polyubiquitin chains.</title>
        <authorList>
            <person name="Xia Z.-P."/>
            <person name="Sun L."/>
            <person name="Chen X."/>
            <person name="Pineda G."/>
            <person name="Jiang X."/>
            <person name="Adhikari A."/>
            <person name="Zeng W."/>
            <person name="Chen Z.J."/>
        </authorList>
    </citation>
    <scope>INTERACTION WITH TAB2</scope>
    <scope>PHOSPHORYLATION AT THR-187</scope>
</reference>
<reference key="37">
    <citation type="journal article" date="2007" name="Oncogene">
        <title>Ubiquitin-mediated activation of TAK1 and IKK.</title>
        <authorList>
            <person name="Adhikari A."/>
            <person name="Xu M."/>
            <person name="Chen Z.J."/>
        </authorList>
    </citation>
    <scope>REVIEW ON ACTIVITY REGULATION</scope>
</reference>
<reference key="38">
    <citation type="journal article" date="2009" name="Sci. Signal.">
        <title>Quantitative phosphoproteomic analysis of T cell receptor signaling reveals system-wide modulation of protein-protein interactions.</title>
        <authorList>
            <person name="Mayya V."/>
            <person name="Lundgren D.H."/>
            <person name="Hwang S.-I."/>
            <person name="Rezaul K."/>
            <person name="Wu L."/>
            <person name="Eng J.K."/>
            <person name="Rodionov V."/>
            <person name="Han D.K."/>
        </authorList>
    </citation>
    <scope>PHOSPHORYLATION [LARGE SCALE ANALYSIS] AT SER-389 AND SER-439</scope>
    <scope>IDENTIFICATION BY MASS SPECTROMETRY [LARGE SCALE ANALYSIS]</scope>
    <source>
        <tissue>Leukemic T-cell</tissue>
    </source>
</reference>
<reference key="39">
    <citation type="journal article" date="2010" name="Int. J. Biochem. Cell Biol.">
        <title>The TAK1-TRAF6 signalling pathway.</title>
        <authorList>
            <person name="Landstrom M."/>
        </authorList>
    </citation>
    <scope>REVIEW ON ACTIVITY REGULATION</scope>
    <scope>REVIEW ON FUNCTION</scope>
</reference>
<reference key="40">
    <citation type="journal article" date="2010" name="Sci. Signal.">
        <title>Quantitative phosphoproteomics reveals widespread full phosphorylation site occupancy during mitosis.</title>
        <authorList>
            <person name="Olsen J.V."/>
            <person name="Vermeulen M."/>
            <person name="Santamaria A."/>
            <person name="Kumar C."/>
            <person name="Miller M.L."/>
            <person name="Jensen L.J."/>
            <person name="Gnad F."/>
            <person name="Cox J."/>
            <person name="Jensen T.S."/>
            <person name="Nigg E.A."/>
            <person name="Brunak S."/>
            <person name="Mann M."/>
        </authorList>
    </citation>
    <scope>PHOSPHORYLATION [LARGE SCALE ANALYSIS] AT SER-439</scope>
    <scope>IDENTIFICATION BY MASS SPECTROMETRY [LARGE SCALE ANALYSIS]</scope>
    <source>
        <tissue>Cervix carcinoma</tissue>
    </source>
</reference>
<reference key="41">
    <citation type="journal article" date="2011" name="BMC Syst. Biol.">
        <title>Initial characterization of the human central proteome.</title>
        <authorList>
            <person name="Burkard T.R."/>
            <person name="Planyavsky M."/>
            <person name="Kaupe I."/>
            <person name="Breitwieser F.P."/>
            <person name="Buerckstuemmer T."/>
            <person name="Bennett K.L."/>
            <person name="Superti-Furga G."/>
            <person name="Colinge J."/>
        </authorList>
    </citation>
    <scope>IDENTIFICATION BY MASS SPECTROMETRY [LARGE SCALE ANALYSIS]</scope>
</reference>
<reference key="42">
    <citation type="journal article" date="2011" name="Proc. Natl. Acad. Sci. U.S.A.">
        <title>Tripartite motif 8 (TRIM8) modulates TNFalpha- and IL-1beta-triggered NF-kappaB activation by targeting TAK1 for K63-linked polyubiquitination.</title>
        <authorList>
            <person name="Li Q."/>
            <person name="Yan J."/>
            <person name="Mao A.P."/>
            <person name="Li C."/>
            <person name="Ran Y."/>
            <person name="Shu H.B."/>
            <person name="Wang Y.Y."/>
        </authorList>
    </citation>
    <scope>INTERACTION WITH TRIM8</scope>
</reference>
<reference key="43">
    <citation type="journal article" date="2011" name="Nature">
        <title>TRIM5 is an innate immune sensor for the retrovirus capsid lattice.</title>
        <authorList>
            <person name="Pertel T."/>
            <person name="Hausmann S."/>
            <person name="Morger D."/>
            <person name="Zueger S."/>
            <person name="Guerra J."/>
            <person name="Lascano J."/>
            <person name="Reinhard C."/>
            <person name="Santoni F.A."/>
            <person name="Uchil P.D."/>
            <person name="Chatel L."/>
            <person name="Bisiaux A."/>
            <person name="Albert M.L."/>
            <person name="Strambio-De-Castillia C."/>
            <person name="Mothes W."/>
            <person name="Pizzato M."/>
            <person name="Gruetter M.G."/>
            <person name="Luban J."/>
        </authorList>
    </citation>
    <scope>FUNCTION</scope>
    <scope>INTERACTION WITH TRIM5</scope>
    <scope>PHOSPHORYLATION AT THR-187</scope>
</reference>
<reference key="44">
    <citation type="journal article" date="2011" name="Sci. Signal.">
        <title>System-wide temporal characterization of the proteome and phosphoproteome of human embryonic stem cell differentiation.</title>
        <authorList>
            <person name="Rigbolt K.T."/>
            <person name="Prokhorova T.A."/>
            <person name="Akimov V."/>
            <person name="Henningsen J."/>
            <person name="Johansen P.T."/>
            <person name="Kratchmarova I."/>
            <person name="Kassem M."/>
            <person name="Mann M."/>
            <person name="Olsen J.V."/>
            <person name="Blagoev B."/>
        </authorList>
    </citation>
    <scope>PHOSPHORYLATION [LARGE SCALE ANALYSIS] AT SER-389 AND SER-439</scope>
    <scope>IDENTIFICATION BY MASS SPECTROMETRY [LARGE SCALE ANALYSIS]</scope>
</reference>
<reference key="45">
    <citation type="journal article" date="2012" name="Cell Host Microbe">
        <title>Yersinia pseudotuberculosis effector YopJ subverts the Nod2/RICK/TAK1 pathway and activates caspase-1 to induce intestinal barrier dysfunction.</title>
        <authorList>
            <person name="Meinzer U."/>
            <person name="Barreau F."/>
            <person name="Esmiol-Welterlin S."/>
            <person name="Jung C."/>
            <person name="Villard C."/>
            <person name="Leger T."/>
            <person name="Ben-Mkaddem S."/>
            <person name="Berrebi D."/>
            <person name="Dussaillant M."/>
            <person name="Alnabhani Z."/>
            <person name="Roy M."/>
            <person name="Bonacorsi S."/>
            <person name="Wolf-Watz H."/>
            <person name="Perroy J."/>
            <person name="Ollendorff V."/>
            <person name="Hugot J.P."/>
        </authorList>
    </citation>
    <scope>ACETYLATION AT THR-184; THR-187; THR-341; THR-444; THR-446; THR-448 AND THR-467 (MICROBIAL INFECTION)</scope>
</reference>
<reference key="46">
    <citation type="journal article" date="2012" name="Cell. Signal.">
        <title>Lys48-linked TAK1 polyubiquitination at lysine-72 downregulates TNFalpha-induced NF-kappaB activation via mediating TAK1 degradation.</title>
        <authorList>
            <person name="Fan Y."/>
            <person name="Shi Y."/>
            <person name="Liu S."/>
            <person name="Mao R."/>
            <person name="An L."/>
            <person name="Zhao Y."/>
            <person name="Zhang H."/>
            <person name="Zhang F."/>
            <person name="Xu G."/>
            <person name="Qin J."/>
            <person name="Yang J."/>
        </authorList>
    </citation>
    <scope>UBIQUITINATION AT LYS-72</scope>
</reference>
<reference key="47">
    <citation type="journal article" date="2012" name="Proc. Natl. Acad. Sci. U.S.A.">
        <title>Serine/threonine acetylation of TGFbeta-activated kinase (TAK1) by Yersinia pestis YopJ inhibits innate immune signaling.</title>
        <authorList>
            <person name="Paquette N."/>
            <person name="Conlon J."/>
            <person name="Sweet C."/>
            <person name="Rus F."/>
            <person name="Wilson L."/>
            <person name="Pereira A."/>
            <person name="Rosadini C.V."/>
            <person name="Goutagny N."/>
            <person name="Weber A.N."/>
            <person name="Lane W.S."/>
            <person name="Shaffer S.A."/>
            <person name="Maniatis S."/>
            <person name="Fitzgerald K.A."/>
            <person name="Stuart L."/>
            <person name="Silverman N."/>
        </authorList>
    </citation>
    <scope>ACETYLATION AT THR-184 AND THR-187 (MICROBIAL INFECTION)</scope>
    <scope>MUTAGENESIS OF LYS-63</scope>
</reference>
<reference key="48">
    <citation type="journal article" date="2013" name="J. Immunol.">
        <title>SASH1 is a scaffold molecule in endothelial TLR4 signaling.</title>
        <authorList>
            <person name="Dauphinee S.M."/>
            <person name="Clayton A."/>
            <person name="Hussainkhel A."/>
            <person name="Yang C."/>
            <person name="Park Y.J."/>
            <person name="Fuller M.E."/>
            <person name="Blonder J."/>
            <person name="Veenstra T.D."/>
            <person name="Karsan A."/>
        </authorList>
    </citation>
    <scope>INTERACTION WITH SASH1</scope>
</reference>
<reference key="49">
    <citation type="journal article" date="2013" name="J. Proteome Res.">
        <title>Toward a comprehensive characterization of a human cancer cell phosphoproteome.</title>
        <authorList>
            <person name="Zhou H."/>
            <person name="Di Palma S."/>
            <person name="Preisinger C."/>
            <person name="Peng M."/>
            <person name="Polat A.N."/>
            <person name="Heck A.J."/>
            <person name="Mohammed S."/>
        </authorList>
    </citation>
    <scope>PHOSPHORYLATION [LARGE SCALE ANALYSIS] AT SER-367; SER-389; SER-439 AND SER-455</scope>
    <scope>IDENTIFICATION BY MASS SPECTROMETRY [LARGE SCALE ANALYSIS]</scope>
    <source>
        <tissue>Cervix carcinoma</tissue>
        <tissue>Erythroleukemia</tissue>
    </source>
</reference>
<reference key="50">
    <citation type="journal article" date="2014" name="J. Proteomics">
        <title>An enzyme assisted RP-RPLC approach for in-depth analysis of human liver phosphoproteome.</title>
        <authorList>
            <person name="Bian Y."/>
            <person name="Song C."/>
            <person name="Cheng K."/>
            <person name="Dong M."/>
            <person name="Wang F."/>
            <person name="Huang J."/>
            <person name="Sun D."/>
            <person name="Wang L."/>
            <person name="Ye M."/>
            <person name="Zou H."/>
        </authorList>
    </citation>
    <scope>PHOSPHORYLATION [LARGE SCALE ANALYSIS] AT SER-439</scope>
    <scope>IDENTIFICATION BY MASS SPECTROMETRY [LARGE SCALE ANALYSIS]</scope>
    <source>
        <tissue>Liver</tissue>
    </source>
</reference>
<reference key="51">
    <citation type="journal article" date="2014" name="J. Biol. Chem.">
        <title>Characterization of the deubiquitinating activity of USP19 and its role in endoplasmic reticulum-associated degradation.</title>
        <authorList>
            <person name="Lee J.G."/>
            <person name="Kim W."/>
            <person name="Gygi S."/>
            <person name="Ye Y."/>
        </authorList>
    </citation>
    <scope>DEUBIQUITINATION BY USP19</scope>
</reference>
<reference key="52">
    <citation type="journal article" date="2015" name="Cell. Signal.">
        <title>IFIT5 positively regulates NF-kappaB signaling through synergizing the recruitment of IkappaB kinase (IKK) to TGF-beta-activated kinase 1 (TAK1).</title>
        <authorList>
            <person name="Zheng C."/>
            <person name="Zheng Z."/>
            <person name="Zhang Z."/>
            <person name="Meng J."/>
            <person name="Liu Y."/>
            <person name="Ke X."/>
            <person name="Hu Q."/>
            <person name="Wang H."/>
        </authorList>
    </citation>
    <scope>INTERACTION WITH IFIT5</scope>
</reference>
<reference key="53">
    <citation type="journal article" date="2016" name="Am. J. Hum. Genet.">
        <title>Mutations in MAP3K7 that alter the activity of the TAK1 signaling complex cause frontometaphyseal dysplasia.</title>
        <authorList>
            <person name="Wade E.M."/>
            <person name="Daniel P.B."/>
            <person name="Jenkins Z.A."/>
            <person name="McInerney-Leo A."/>
            <person name="Leo P."/>
            <person name="Morgan T."/>
            <person name="Addor M.C."/>
            <person name="Ades L.C."/>
            <person name="Bertola D."/>
            <person name="Bohring A."/>
            <person name="Carter E."/>
            <person name="Cho T.J."/>
            <person name="Duba H.C."/>
            <person name="Fletcher E."/>
            <person name="Kim C.A."/>
            <person name="Krakow D."/>
            <person name="Morava E."/>
            <person name="Neuhann T."/>
            <person name="Superti-Furga A."/>
            <person name="Veenstra-Knol I."/>
            <person name="Wieczorek D."/>
            <person name="Wilson L.C."/>
            <person name="Hennekam R.C."/>
            <person name="Sutherland-Smith A.J."/>
            <person name="Strom T.M."/>
            <person name="Wilkie A.O."/>
            <person name="Brown M.A."/>
            <person name="Duncan E.L."/>
            <person name="Markie D.M."/>
            <person name="Robertson S.P."/>
        </authorList>
    </citation>
    <scope>INVOLVEMENT IN FMD2</scope>
    <scope>VARIANTS FMD2 GLN-70; GLU-100; ARG-168 AND LEU-512</scope>
    <scope>CHARACTERIZATION OF VARIANTS FMD2 LEU-512 AND ARG-168</scope>
    <scope>SUBUNIT</scope>
    <scope>MUTAGENESIS OF PRO-512</scope>
</reference>
<reference key="54">
    <citation type="journal article" date="2016" name="Am. J. Hum. Genet.">
        <title>Heterozygous mutations in MAP3K7, encoding TGF-beta-activated kinase 1, cause cardiospondylocarpofacial syndrome.</title>
        <authorList>
            <person name="Le Goff C."/>
            <person name="Rogers C."/>
            <person name="Le Goff W."/>
            <person name="Pinto G."/>
            <person name="Bonnet D."/>
            <person name="Chrabieh M."/>
            <person name="Alibeu O."/>
            <person name="Nistchke P."/>
            <person name="Munnich A."/>
            <person name="Picard C."/>
            <person name="Cormier-Daire V."/>
        </authorList>
    </citation>
    <scope>INVOLVEMENT IN CSCF</scope>
    <scope>VARIANTS CSCF VAL-50 DEL; CYS-110 AND ARG-241</scope>
</reference>
<reference key="55">
    <citation type="journal article" date="2017" name="Sci. Rep.">
        <title>The Us2 Gene Product of herpes dimplex virus 2 modulates NF-kappaB activation by targeting TAK1.</title>
        <authorList>
            <person name="Lu X."/>
            <person name="Huang C."/>
            <person name="Zhang Y."/>
            <person name="Lin Y."/>
            <person name="Wang X."/>
            <person name="Li Q."/>
            <person name="Liu S."/>
            <person name="Tang J."/>
            <person name="Zhou L."/>
        </authorList>
    </citation>
    <scope>INTERACTION WITH HHV-2 PROTEIN US2 (MICROBIAL INFECTION)</scope>
</reference>
<reference key="56">
    <citation type="journal article" date="2017" name="J. Virol.">
        <title>Disruption of MDA5-Mediated Innate Immune Responses by the 3C Proteins of Coxsackievirus A16, Coxsackievirus A6, and Enterovirus D68.</title>
        <authorList>
            <person name="Rui Y."/>
            <person name="Su J."/>
            <person name="Wang H."/>
            <person name="Chang J."/>
            <person name="Wang S."/>
            <person name="Zheng W."/>
            <person name="Cai Y."/>
            <person name="Wei W."/>
            <person name="Gordy J.T."/>
            <person name="Markham R."/>
            <person name="Kong W."/>
            <person name="Zhang W."/>
            <person name="Yu X.F."/>
        </authorList>
    </citation>
    <scope>PROTEOLYTIC CLEAVAGE (MICROBIAL INFECTION)</scope>
</reference>
<reference key="57">
    <citation type="journal article" date="2018" name="Nat. Med.">
        <title>The deubiquitinating enzyme cylindromatosis mitigates nonalcoholic steatohepatitis.</title>
        <authorList>
            <person name="Ji Y.X."/>
            <person name="Huang Z."/>
            <person name="Yang X."/>
            <person name="Wang X."/>
            <person name="Zhao L.P."/>
            <person name="Wang P.X."/>
            <person name="Zhang X.J."/>
            <person name="Alves-Bezerra M."/>
            <person name="Cai L."/>
            <person name="Zhang P."/>
            <person name="Lu Y.X."/>
            <person name="Bai L."/>
            <person name="Gao M.M."/>
            <person name="Zhao H."/>
            <person name="Tian S."/>
            <person name="Wang Y."/>
            <person name="Huang Z.X."/>
            <person name="Zhu X.Y."/>
            <person name="Zhang Y."/>
            <person name="Gong J."/>
            <person name="She Z.G."/>
            <person name="Li F."/>
            <person name="Cohen D.E."/>
            <person name="Li H."/>
        </authorList>
    </citation>
    <scope>ACTIVITY REGULATION</scope>
    <scope>MUTAGENESIS OF LYS-34; LYS-158 AND LYS-209</scope>
</reference>
<reference key="58">
    <citation type="journal article" date="2023" name="Mol. Cell">
        <title>TAK1 is an essential kinase for STING trafficking.</title>
        <authorList>
            <person name="Ma M."/>
            <person name="Dang Y."/>
            <person name="Chang B."/>
            <person name="Wang F."/>
            <person name="Xu J."/>
            <person name="Chen L."/>
            <person name="Su H."/>
            <person name="Li J."/>
            <person name="Ge B."/>
            <person name="Chen C."/>
            <person name="Liu H."/>
        </authorList>
    </citation>
    <scope>FUNCTION</scope>
    <scope>CATALYTIC ACTIVITY</scope>
    <scope>ACTIVITY REGULATION</scope>
    <scope>PHOSPHORYLATION AT THR-184 AND THR-187</scope>
</reference>
<reference key="59">
    <citation type="journal article" date="2005" name="J. Mol. Biol.">
        <title>Structural basis for the interaction of TAK1 kinase with its activating protein TAB1.</title>
        <authorList>
            <person name="Brown K."/>
            <person name="Vial S.C."/>
            <person name="Dedi N."/>
            <person name="Long J.M."/>
            <person name="Dunster N.J."/>
            <person name="Cheetham G.M.T."/>
        </authorList>
    </citation>
    <scope>X-RAY CRYSTALLOGRAPHY (2.0 ANGSTROMS) OF 31-328 IN COMPLEX WITH TAB1 AND ADENOSINE</scope>
    <scope>COFACTOR</scope>
</reference>
<reference key="60">
    <citation type="journal article" date="2018" name="Mol. Psychiatry">
        <title>Mapping autosomal recessive intellectual disability: combined microarray and exome sequencing identifies 26 novel candidate genes in 192 consanguineous families.</title>
        <authorList>
            <person name="Harripaul R."/>
            <person name="Vasli N."/>
            <person name="Mikhailov A."/>
            <person name="Rafiq M.A."/>
            <person name="Mittal K."/>
            <person name="Windpassinger C."/>
            <person name="Sheikh T.I."/>
            <person name="Noor A."/>
            <person name="Mahmood H."/>
            <person name="Downey S."/>
            <person name="Johnson M."/>
            <person name="Vleuten K."/>
            <person name="Bell L."/>
            <person name="Ilyas M."/>
            <person name="Khan F.S."/>
            <person name="Khan V."/>
            <person name="Moradi M."/>
            <person name="Ayaz M."/>
            <person name="Naeem F."/>
            <person name="Heidari A."/>
            <person name="Ahmed I."/>
            <person name="Ghadami S."/>
            <person name="Agha Z."/>
            <person name="Zeinali S."/>
            <person name="Qamar R."/>
            <person name="Mozhdehipanah H."/>
            <person name="John P."/>
            <person name="Mir A."/>
            <person name="Ansar M."/>
            <person name="French L."/>
            <person name="Ayub M."/>
            <person name="Vincent J.B."/>
        </authorList>
    </citation>
    <scope>VARIANT GLN-410</scope>
</reference>
<accession>O43318</accession>
<accession>B2RE27</accession>
<accession>E1P523</accession>
<accession>O43317</accession>
<accession>O43319</accession>
<accession>Q5TDN2</accession>
<accession>Q5TDN3</accession>
<accession>Q5TDT7</accession>
<accession>Q9NTR3</accession>
<accession>Q9NZ70</accession>
<feature type="chain" id="PRO_0000086252" description="Mitogen-activated protein kinase kinase kinase 7">
    <location>
        <begin position="1"/>
        <end position="606"/>
    </location>
</feature>
<feature type="domain" description="Protein kinase" evidence="3">
    <location>
        <begin position="36"/>
        <end position="291"/>
    </location>
</feature>
<feature type="region of interest" description="Interaction with MAPK8IP1" evidence="1">
    <location>
        <begin position="1"/>
        <end position="300"/>
    </location>
</feature>
<feature type="region of interest" description="Disordered" evidence="5">
    <location>
        <begin position="301"/>
        <end position="338"/>
    </location>
</feature>
<feature type="region of interest" description="Disordered" evidence="5">
    <location>
        <begin position="354"/>
        <end position="391"/>
    </location>
</feature>
<feature type="region of interest" description="Disordered" evidence="5">
    <location>
        <begin position="443"/>
        <end position="493"/>
    </location>
</feature>
<feature type="compositionally biased region" description="Polar residues" evidence="5">
    <location>
        <begin position="306"/>
        <end position="338"/>
    </location>
</feature>
<feature type="compositionally biased region" description="Low complexity" evidence="5">
    <location>
        <begin position="361"/>
        <end position="375"/>
    </location>
</feature>
<feature type="compositionally biased region" description="Polar residues" evidence="5">
    <location>
        <begin position="443"/>
        <end position="452"/>
    </location>
</feature>
<feature type="compositionally biased region" description="Low complexity" evidence="5">
    <location>
        <begin position="453"/>
        <end position="463"/>
    </location>
</feature>
<feature type="compositionally biased region" description="Polar residues" evidence="5">
    <location>
        <begin position="464"/>
        <end position="473"/>
    </location>
</feature>
<feature type="active site" description="Proton acceptor" evidence="3 4">
    <location>
        <position position="156"/>
    </location>
</feature>
<feature type="binding site" evidence="3">
    <location>
        <begin position="42"/>
        <end position="50"/>
    </location>
    <ligand>
        <name>ATP</name>
        <dbReference type="ChEBI" id="CHEBI:30616"/>
    </ligand>
</feature>
<feature type="binding site">
    <location>
        <position position="63"/>
    </location>
    <ligand>
        <name>ATP</name>
        <dbReference type="ChEBI" id="CHEBI:30616"/>
    </ligand>
</feature>
<feature type="modified residue" description="(Microbial infection) O-acetylthreonine; by Yersinia YopJ; alternate" evidence="31 32">
    <location>
        <position position="184"/>
    </location>
</feature>
<feature type="modified residue" description="Phosphothreonine; by autocatalysis; alternate" evidence="42 52">
    <location>
        <position position="184"/>
    </location>
</feature>
<feature type="modified residue" description="(Microbial infection) O-acetylthreonine; by Yersinia YopJ; alternate" evidence="31 32">
    <location>
        <position position="187"/>
    </location>
</feature>
<feature type="modified residue" description="Phosphothreonine; by autocatalysis; alternate" evidence="8 19 27 28 42">
    <location>
        <position position="187"/>
    </location>
</feature>
<feature type="modified residue" description="Phosphoserine; by autocatalysis" evidence="7 8">
    <location>
        <position position="192"/>
    </location>
</feature>
<feature type="modified residue" description="(Microbial infection) O-acetylthreonine; by Yersinia YopJ; alternate" evidence="31">
    <location>
        <position position="341"/>
    </location>
</feature>
<feature type="modified residue" description="Phosphoserine" evidence="63">
    <location>
        <position position="367"/>
    </location>
</feature>
<feature type="modified residue" description="Phosphoserine" evidence="57 59 60 62 63">
    <location>
        <position position="389"/>
    </location>
</feature>
<feature type="modified residue" description="Phosphoserine" evidence="55 56 57 58 59 60 61 62 63 64">
    <location>
        <position position="439"/>
    </location>
</feature>
<feature type="modified residue" description="(Microbial infection) O-acetylthreonine; by Yersinia YopJ; alternate" evidence="31">
    <location>
        <position position="444"/>
    </location>
</feature>
<feature type="modified residue" description="(Microbial infection) O-acetylthreonine; by Yersinia YopJ; alternate" evidence="31">
    <location>
        <position position="446"/>
    </location>
</feature>
<feature type="modified residue" description="(Microbial infection) O-acetylthreonine; by Yersinia YopJ; alternate" evidence="31">
    <location>
        <position position="448"/>
    </location>
</feature>
<feature type="modified residue" description="Phosphoserine" evidence="63">
    <location>
        <position position="455"/>
    </location>
</feature>
<feature type="modified residue" description="(Microbial infection) O-acetylthreonine; by Yersinia YopJ; alternate" evidence="31">
    <location>
        <position position="467"/>
    </location>
</feature>
<feature type="cross-link" description="Glycyl lysine isopeptide (Lys-Gly) (interchain with G-Cter in ubiquitin)" evidence="30">
    <location>
        <position position="72"/>
    </location>
</feature>
<feature type="cross-link" description="Glycyl lysine isopeptide (Lys-Gly) (interchain with G-Cter in ubiquitin)" evidence="2">
    <location>
        <position position="158"/>
    </location>
</feature>
<feature type="cross-link" description="Glycyl lysine isopeptide (Lys-Gly) (interchain with G-Cter in ubiquitin)" evidence="2">
    <location>
        <position position="209"/>
    </location>
</feature>
<feature type="splice variant" id="VSP_004886" description="In isoform 1A and isoform 1D." evidence="46 47 48 50">
    <location>
        <begin position="404"/>
        <end position="430"/>
    </location>
</feature>
<feature type="splice variant" id="VSP_004887" description="In isoform 1C and isoform 1D." evidence="46 50">
    <original>PLAPCPNSKE</original>
    <variation>ARTSCRTGPG</variation>
    <location>
        <begin position="509"/>
        <end position="518"/>
    </location>
</feature>
<feature type="splice variant" id="VSP_004888" description="In isoform 1C and isoform 1D." evidence="46 50">
    <location>
        <begin position="519"/>
        <end position="606"/>
    </location>
</feature>
<feature type="sequence variant" id="VAR_077341" description="In CSCF; dbSNP:rs886039236." evidence="37">
    <location>
        <position position="50"/>
    </location>
</feature>
<feature type="sequence variant" id="VAR_077342" description="In FMD2; dbSNP:rs886039231." evidence="36">
    <original>E</original>
    <variation>Q</variation>
    <location>
        <position position="70"/>
    </location>
</feature>
<feature type="sequence variant" id="VAR_077343" description="In FMD2; dbSNP:rs886039232." evidence="36">
    <original>V</original>
    <variation>E</variation>
    <location>
        <position position="100"/>
    </location>
</feature>
<feature type="sequence variant" id="VAR_077344" description="In CSCF; dbSNP:rs886039235." evidence="37">
    <original>G</original>
    <variation>C</variation>
    <location>
        <position position="110"/>
    </location>
</feature>
<feature type="sequence variant" id="VAR_077345" description="In FMD2; increases autophosphorylation; no effect on MAPK signaling; no effect on NF-kappa-B signaling; dbSNP:rs886039233." evidence="36">
    <original>G</original>
    <variation>R</variation>
    <location>
        <position position="168"/>
    </location>
</feature>
<feature type="sequence variant" id="VAR_077346" description="In CSCF; dbSNP:rs886039237." evidence="37">
    <original>W</original>
    <variation>R</variation>
    <location>
        <position position="241"/>
    </location>
</feature>
<feature type="sequence variant" id="VAR_080761" description="Found in a consanguineous family with intellectual disability; uncertain significance; dbSNP:rs201721045." evidence="38">
    <original>R</original>
    <variation>Q</variation>
    <location>
        <position position="410"/>
    </location>
</feature>
<feature type="sequence variant" id="VAR_077347" description="In FMD2; does not affect interaction with TAB2; does not affect homodimerization; increases autophosphorylation; increases MAPK signaling; increases NF-kappa-B signaling; dbSNP:rs886039230." evidence="36">
    <original>P</original>
    <variation>L</variation>
    <location>
        <position position="512"/>
    </location>
</feature>
<feature type="mutagenesis site" description="No effect on ubiquitination." evidence="41">
    <original>K</original>
    <variation>R</variation>
    <location>
        <position position="34"/>
    </location>
</feature>
<feature type="mutagenesis site" description="Loss of kinase activity. Loss of autophosphorylation." evidence="13 32">
    <original>K</original>
    <variation>W</variation>
    <location>
        <position position="63"/>
    </location>
</feature>
<feature type="mutagenesis site" description="Abolishes ubiquitination." evidence="41">
    <original>K</original>
    <variation>R</variation>
    <location>
        <position position="158"/>
    </location>
</feature>
<feature type="mutagenesis site" description="Strongly decreases ubiquitination." evidence="41">
    <original>K</original>
    <variation>R</variation>
    <location>
        <position position="209"/>
    </location>
</feature>
<feature type="mutagenesis site" description="Enhances autophosphorylation; Alters MAPK signaling." evidence="36">
    <original>P</original>
    <variation>R</variation>
    <variation>A</variation>
    <location>
        <position position="512"/>
    </location>
</feature>
<feature type="helix" evidence="67">
    <location>
        <begin position="33"/>
        <end position="35"/>
    </location>
</feature>
<feature type="strand" evidence="67">
    <location>
        <begin position="36"/>
        <end position="44"/>
    </location>
</feature>
<feature type="strand" evidence="67">
    <location>
        <begin position="46"/>
        <end position="57"/>
    </location>
</feature>
<feature type="strand" evidence="67">
    <location>
        <begin position="59"/>
        <end position="64"/>
    </location>
</feature>
<feature type="helix" evidence="67">
    <location>
        <begin position="68"/>
        <end position="70"/>
    </location>
</feature>
<feature type="helix" evidence="67">
    <location>
        <begin position="71"/>
        <end position="83"/>
    </location>
</feature>
<feature type="strand" evidence="67">
    <location>
        <begin position="92"/>
        <end position="96"/>
    </location>
</feature>
<feature type="turn" evidence="67">
    <location>
        <begin position="97"/>
        <end position="100"/>
    </location>
</feature>
<feature type="strand" evidence="67">
    <location>
        <begin position="101"/>
        <end position="105"/>
    </location>
</feature>
<feature type="strand" evidence="67">
    <location>
        <begin position="108"/>
        <end position="111"/>
    </location>
</feature>
<feature type="helix" evidence="67">
    <location>
        <begin position="112"/>
        <end position="117"/>
    </location>
</feature>
<feature type="strand" evidence="67">
    <location>
        <begin position="118"/>
        <end position="123"/>
    </location>
</feature>
<feature type="helix" evidence="67">
    <location>
        <begin position="127"/>
        <end position="145"/>
    </location>
</feature>
<feature type="strand" evidence="67">
    <location>
        <begin position="148"/>
        <end position="150"/>
    </location>
</feature>
<feature type="helix" evidence="67">
    <location>
        <begin position="159"/>
        <end position="161"/>
    </location>
</feature>
<feature type="strand" evidence="67">
    <location>
        <begin position="162"/>
        <end position="165"/>
    </location>
</feature>
<feature type="turn" evidence="67">
    <location>
        <begin position="166"/>
        <end position="169"/>
    </location>
</feature>
<feature type="strand" evidence="67">
    <location>
        <begin position="170"/>
        <end position="173"/>
    </location>
</feature>
<feature type="helix" evidence="65">
    <location>
        <begin position="182"/>
        <end position="186"/>
    </location>
</feature>
<feature type="helix" evidence="67">
    <location>
        <begin position="193"/>
        <end position="195"/>
    </location>
</feature>
<feature type="helix" evidence="67">
    <location>
        <begin position="198"/>
        <end position="201"/>
    </location>
</feature>
<feature type="helix" evidence="67">
    <location>
        <begin position="209"/>
        <end position="224"/>
    </location>
</feature>
<feature type="turn" evidence="67">
    <location>
        <begin position="228"/>
        <end position="231"/>
    </location>
</feature>
<feature type="helix" evidence="67">
    <location>
        <begin position="236"/>
        <end position="244"/>
    </location>
</feature>
<feature type="helix" evidence="67">
    <location>
        <begin position="257"/>
        <end position="266"/>
    </location>
</feature>
<feature type="helix" evidence="67">
    <location>
        <begin position="271"/>
        <end position="273"/>
    </location>
</feature>
<feature type="helix" evidence="67">
    <location>
        <begin position="277"/>
        <end position="288"/>
    </location>
</feature>
<feature type="turn" evidence="67">
    <location>
        <begin position="292"/>
        <end position="295"/>
    </location>
</feature>
<feature type="strand" evidence="66">
    <location>
        <begin position="300"/>
        <end position="302"/>
    </location>
</feature>
<comment type="function">
    <text evidence="2 6 11 13 19 20 28 42 44 45">Serine/threonine kinase which acts as an essential component of the MAP kinase signal transduction pathway (PubMed:10094049, PubMed:11460167, PubMed:12589052, PubMed:16845370, PubMed:16893890, PubMed:21512573, PubMed:8663074, PubMed:9079627). Plays an important role in the cascades of cellular responses evoked by changes in the environment (PubMed:10094049, PubMed:11460167, PubMed:12589052, PubMed:16845370, PubMed:16893890, PubMed:21512573, PubMed:8663074, PubMed:9079627). Mediates signal transduction of TRAF6, various cytokines including interleukin-1 (IL-1), transforming growth factor-beta (TGFB), TGFB-related factors like BMP2 and BMP4, toll-like receptors (TLR), tumor necrosis factor receptor CD40 and B-cell receptor (BCR) (PubMed:16893890, PubMed:9079627). Once activated, acts as an upstream activator of the MKK/JNK signal transduction cascade and the p38 MAPK signal transduction cascade through the phosphorylation and activation of several MAP kinase kinases like MAP2K1/MEK1, MAP2K3/MKK3, MAP2K6/MKK6 and MAP2K7/MKK7 (PubMed:11460167, PubMed:8663074). These MAP2Ks in turn activate p38 MAPKs and c-jun N-terminal kinases (JNKs); both p38 MAPK and JNK pathways control the transcription factors activator protein-1 (AP-1) (PubMed:11460167, PubMed:12589052, PubMed:8663074). Independently of MAP2Ks and p38 MAPKs, acts as a key activator of NF-kappa-B by promoting activation of the I-kappa-B-kinase (IKK) core complex (PubMed:12589052, PubMed:8663074). Mechanistically, recruited to polyubiquitin chains of RIPK2 and IKBKG/NEMO via TAB2/MAP3K7IP2 and TAB3/MAP3K7IP3, and catalyzes phosphorylation and activation of IKBKB/IKKB component of the IKK complex, leading to NF-kappa-B activation (PubMed:10094049, PubMed:11460167). In osmotic stress signaling, plays a major role in the activation of MAPK8/JNK1, but not that of NF-kappa-B (PubMed:16893890). Promotes TRIM5 capsid-specific restriction activity (PubMed:21512573). Phosphorylates RIPK1 at 'Ser-321' which positively regulates RIPK1 interaction with RIPK3 to promote necroptosis but negatively regulates RIPK1 kinase activity and its interaction with FADD to mediate apoptosis (By similarity). Phosphorylates STING1 in response to cGAMP-activation, promoting association between STEEP1 and STING1 and STING1 translocation to COPII vesicles (PubMed:37832545).</text>
</comment>
<comment type="catalytic activity">
    <reaction evidence="6 8 13 42">
        <text>L-seryl-[protein] + ATP = O-phospho-L-seryl-[protein] + ADP + H(+)</text>
        <dbReference type="Rhea" id="RHEA:17989"/>
        <dbReference type="Rhea" id="RHEA-COMP:9863"/>
        <dbReference type="Rhea" id="RHEA-COMP:11604"/>
        <dbReference type="ChEBI" id="CHEBI:15378"/>
        <dbReference type="ChEBI" id="CHEBI:29999"/>
        <dbReference type="ChEBI" id="CHEBI:30616"/>
        <dbReference type="ChEBI" id="CHEBI:83421"/>
        <dbReference type="ChEBI" id="CHEBI:456216"/>
        <dbReference type="EC" id="2.7.11.25"/>
    </reaction>
</comment>
<comment type="catalytic activity">
    <reaction evidence="6 8 13">
        <text>L-threonyl-[protein] + ATP = O-phospho-L-threonyl-[protein] + ADP + H(+)</text>
        <dbReference type="Rhea" id="RHEA:46608"/>
        <dbReference type="Rhea" id="RHEA-COMP:11060"/>
        <dbReference type="Rhea" id="RHEA-COMP:11605"/>
        <dbReference type="ChEBI" id="CHEBI:15378"/>
        <dbReference type="ChEBI" id="CHEBI:30013"/>
        <dbReference type="ChEBI" id="CHEBI:30616"/>
        <dbReference type="ChEBI" id="CHEBI:61977"/>
        <dbReference type="ChEBI" id="CHEBI:456216"/>
        <dbReference type="EC" id="2.7.11.25"/>
    </reaction>
</comment>
<comment type="cofactor">
    <cofactor evidence="53">
        <name>Mg(2+)</name>
        <dbReference type="ChEBI" id="CHEBI:18420"/>
    </cofactor>
</comment>
<comment type="activity regulation">
    <text evidence="7 9 11 12 20 21 41 42 45">Activated by pro-inflammatory cytokines and in response to physical and chemical stresses, including osmotic stress, oxidative stress, arsenic and ultraviolet light irradiation (PubMed:16893890). Activated by 'Lys-63'-linked polyubiquitination and by autophosphorylation (PubMed:10702308, PubMed:11460167, PubMed:12242293, PubMed:29291351). Association with TAB1/MAP3K7IP1 and TAB2/MAP3K7IP2 promotes activation through autophosphorylation, whereas PPM1B/PP2CB, PP2A and PPP6C dephosphorylation leads to inactivation (PubMed:11104763, PubMed:17079228, PubMed:37832545). Ceramides are also able to activate MAP3K7/TAK1 (PubMed:9079627).</text>
</comment>
<comment type="subunit">
    <text evidence="2 6 8 9 11 12 13 14 15 16 17 18 19 20 21 22 23 24 25 26 27 28 29 33 35 36 43">Can form homodimer (PubMed:27426733). Binds both upstream activators and downstream substrates in multimolecular complexes. Interacts with TAB1/MAP3K7IP1, TAB2/MAP3K7IP2 and TAB3/MAP3K7IP3 (PubMed:10838074, PubMed:11460167, PubMed:12242293, PubMed:14670075, PubMed:16289117, PubMed:19675569, PubMed:8638164). Identified in the TRIKA2 complex composed of MAP3K7/TAK1, TAB1/MAP3K7IP1 and TAB2/MAP3K7IP2 (PubMed:11460167). Interacts with PPM1L and PPM1B/PP2CB (PubMed:11104763). Interaction with PP2A and PPP6C leads to its repressed activity (PubMed:17079228). Interacts with TRAF6 and TAB1/MAP3K7IP1; during IL-1 signaling (PubMed:10094049, PubMed:12242293). Interacts with TAOK1 and TAOK2; interaction with TAOK2 interferes with MAP3K7 interaction with IKKA, thus preventing NF-kappa-B activation (PubMed:16893890). Interacts with DYNC2I2 (via WD domains) (PubMed:19521662). Interacts with CYLD and RBCK1 (PubMed:17449468, PubMed:17548520). Interacts with TGFBR1; induces MAP3K7/TAK1 activation by TRAF6 (PubMed:18758450). Interacts with MAPK8IP1 and SMAD6 (By similarity). Interacts with isoform 1 of VRK2 (PubMed:18286207). Interacts with DAB2; the interaction is induced by TGF-beta stimulation and may mediate TGF-beta stimulated JNK activation (PubMed:15894542). Interacts with TRIM5 (PubMed:21512573). Part of a complex containing ITCH, NDFIP1 and MAP3K7 (By similarity). Interacts with IFIT5; the interaction synergizes the recruitment of IKK to MAP3K7 and enhances IKK phosphorylation (PubMed:26334375). Interacts with PLEKHM1 (via N- and C-terminus) (By similarity). Interacts with TRIM8 (PubMed:22084099). Found in a complex with SH3RF1, RAC2, MAP2K7/MKK7, MAPK8IP1/JIP1, MAPK8/JNK1 and MAPK9/JNK2 (By similarity). Interacts with SASH1 (PubMed:23776175). Interacts with RIPK1 (By similarity).</text>
</comment>
<comment type="subunit">
    <text evidence="40">(Microbial infection) Interacts with herpes simplex virus 2 protein US2; this interaction induces MAP3K7 phosphorylation and subsequent activation.</text>
</comment>
<comment type="interaction">
    <interactant intactId="EBI-358684">
        <id>O43318</id>
    </interactant>
    <interactant intactId="EBI-295634">
        <id>Q16543</id>
        <label>CDC37</label>
    </interactant>
    <organismsDiffer>false</organismsDiffer>
    <experiments>4</experiments>
</comment>
<comment type="interaction">
    <interactant intactId="EBI-358684">
        <id>O43318</id>
    </interactant>
    <interactant intactId="EBI-81266">
        <id>O14920</id>
        <label>IKBKB</label>
    </interactant>
    <organismsDiffer>false</organismsDiffer>
    <experiments>6</experiments>
</comment>
<comment type="interaction">
    <interactant intactId="EBI-358684">
        <id>O43318</id>
    </interactant>
    <interactant intactId="EBI-492605">
        <id>O14733</id>
        <label>MAP2K7</label>
    </interactant>
    <organismsDiffer>false</organismsDiffer>
    <experiments>3</experiments>
</comment>
<comment type="interaction">
    <interactant intactId="EBI-358684">
        <id>O43318</id>
    </interactant>
    <interactant intactId="EBI-78404">
        <id>Q9UQF2</id>
        <label>MAPK8IP1</label>
    </interactant>
    <organismsDiffer>false</organismsDiffer>
    <experiments>11</experiments>
</comment>
<comment type="interaction">
    <interactant intactId="EBI-358684">
        <id>O43318</id>
    </interactant>
    <interactant intactId="EBI-359751">
        <id>O00743</id>
        <label>PPP6C</label>
    </interactant>
    <organismsDiffer>false</organismsDiffer>
    <experiments>4</experiments>
</comment>
<comment type="interaction">
    <interactant intactId="EBI-358684">
        <id>O43318</id>
    </interactant>
    <interactant intactId="EBI-518675">
        <id>P40763</id>
        <label>STAT3</label>
    </interactant>
    <organismsDiffer>false</organismsDiffer>
    <experiments>4</experiments>
</comment>
<comment type="interaction">
    <interactant intactId="EBI-358684">
        <id>O43318</id>
    </interactant>
    <interactant intactId="EBI-358643">
        <id>Q15750</id>
        <label>TAB1</label>
    </interactant>
    <organismsDiffer>false</organismsDiffer>
    <experiments>10</experiments>
</comment>
<comment type="interaction">
    <interactant intactId="EBI-358684">
        <id>O43318</id>
    </interactant>
    <interactant intactId="EBI-358708">
        <id>Q9NYJ8</id>
        <label>TAB2</label>
    </interactant>
    <organismsDiffer>false</organismsDiffer>
    <experiments>8</experiments>
</comment>
<comment type="interaction">
    <interactant intactId="EBI-358684">
        <id>O43318</id>
    </interactant>
    <interactant intactId="EBI-359964">
        <id>Q8N5C8</id>
        <label>TAB3</label>
    </interactant>
    <organismsDiffer>false</organismsDiffer>
    <experiments>5</experiments>
</comment>
<comment type="interaction">
    <interactant intactId="EBI-358684">
        <id>O43318</id>
    </interactant>
    <interactant intactId="EBI-1051794">
        <id>Q9UKE5</id>
        <label>TNIK</label>
    </interactant>
    <organismsDiffer>false</organismsDiffer>
    <experiments>3</experiments>
</comment>
<comment type="interaction">
    <interactant intactId="EBI-358684">
        <id>O43318</id>
    </interactant>
    <interactant intactId="EBI-359276">
        <id>Q9Y4K3</id>
        <label>TRAF6</label>
    </interactant>
    <organismsDiffer>false</organismsDiffer>
    <experiments>2</experiments>
</comment>
<comment type="interaction">
    <interactant intactId="EBI-358684">
        <id>O43318</id>
    </interactant>
    <interactant intactId="EBI-3390054">
        <id>P0CG48</id>
        <label>UBC</label>
    </interactant>
    <organismsDiffer>false</organismsDiffer>
    <experiments>4</experiments>
</comment>
<comment type="interaction">
    <interactant intactId="EBI-358684">
        <id>O43318</id>
    </interactant>
    <interactant intactId="EBI-7287204">
        <id>B5Z6S0</id>
        <label>cagA</label>
    </interactant>
    <organismsDiffer>true</organismsDiffer>
    <experiments>4</experiments>
</comment>
<comment type="interaction">
    <interactant intactId="EBI-358684">
        <id>O43318</id>
    </interactant>
    <interactant intactId="EBI-25475856">
        <id>P0DTC9</id>
        <label>N</label>
    </interactant>
    <organismsDiffer>true</organismsDiffer>
    <experiments>4</experiments>
</comment>
<comment type="interaction">
    <interactant intactId="EBI-358700">
        <id>O43318-2</id>
    </interactant>
    <interactant intactId="EBI-295634">
        <id>Q16543</id>
        <label>CDC37</label>
    </interactant>
    <organismsDiffer>false</organismsDiffer>
    <experiments>5</experiments>
</comment>
<comment type="interaction">
    <interactant intactId="EBI-358700">
        <id>O43318-2</id>
    </interactant>
    <interactant intactId="EBI-296047">
        <id>P07900</id>
        <label>HSP90AA1</label>
    </interactant>
    <organismsDiffer>false</organismsDiffer>
    <experiments>5</experiments>
</comment>
<comment type="interaction">
    <interactant intactId="EBI-358700">
        <id>O43318-2</id>
    </interactant>
    <interactant intactId="EBI-358643">
        <id>Q15750</id>
        <label>TAB1</label>
    </interactant>
    <organismsDiffer>false</organismsDiffer>
    <experiments>3</experiments>
</comment>
<comment type="interaction">
    <interactant intactId="EBI-358700">
        <id>O43318-2</id>
    </interactant>
    <interactant intactId="EBI-358708">
        <id>Q9NYJ8</id>
        <label>TAB2</label>
    </interactant>
    <organismsDiffer>false</organismsDiffer>
    <experiments>2</experiments>
</comment>
<comment type="subcellular location">
    <subcellularLocation>
        <location evidence="12">Cytoplasm</location>
    </subcellularLocation>
    <subcellularLocation>
        <location evidence="12">Cell membrane</location>
        <topology evidence="12">Peripheral membrane protein</topology>
        <orientation evidence="12">Cytoplasmic side</orientation>
    </subcellularLocation>
    <text>Although the majority of MAP3K7/TAK1 is found in the cytosol, when complexed with TAB1/MAP3K7IP1 and TAB2/MAP3K7IP2, it is also localized at the cell membrane.</text>
</comment>
<comment type="alternative products">
    <event type="alternative splicing"/>
    <isoform>
        <id>O43318-1</id>
        <name>1B</name>
        <sequence type="displayed"/>
    </isoform>
    <isoform>
        <id>O43318-2</id>
        <name>1A</name>
        <sequence type="described" ref="VSP_004886"/>
    </isoform>
    <isoform>
        <id>O43318-3</id>
        <name>1C</name>
        <sequence type="described" ref="VSP_004887 VSP_004888"/>
    </isoform>
    <isoform>
        <id>O43318-4</id>
        <name>1D</name>
        <sequence type="described" ref="VSP_004886 VSP_004887 VSP_004888"/>
    </isoform>
</comment>
<comment type="tissue specificity">
    <text evidence="10">Isoform 1A is the most abundant in ovary, skeletal muscle, spleen and blood mononuclear cells. Isoform 1B is highly expressed in brain, kidney and small intestine. Isoform 1C is the major form in prostate. Isoform 1D is the less abundant form.</text>
</comment>
<comment type="PTM">
    <text evidence="7 8 19 23 27 28 42">Association with TAB1/MAP3K7IP1 promotes autophosphorylation at Ser-192 and subsequent activation. Association with TAB2/MAP3K7IP2, itself associated with free unanchored Lys-63 polyubiquitin chain, promotes autophosphorylation and subsequent activation of MAP3K7. Dephosphorylation at Ser-192 by PPM1B/PP2CB and at Thr-187 by PP2A and PPP6C leads to inactivation.</text>
</comment>
<comment type="PTM">
    <text evidence="2 23 30 34">'Lys-48'-linked polyubiquitination at Lys-72 is induced by TNFalpha, and leads to proteasomal degradation. Undergoes 'Lys-48'-linked polyubiquitination catalyzed by ITCH (By similarity). Requires 'Lys-63'-linked polyubiquitination for autophosphorylation and subsequent activation. 'Lys-63'-linked ubiquitination does not lead to proteasomal degradation. Deubiquitinated by CYLD, a protease that selectively cleaves 'Lys-63'-linked ubiquitin chains. Deubiquitinated by Y.enterocolitica YopP. Deubiquitinated by USP19; leading to negative regulation of TNF-alpha- and IL-1beta-triggered NF-kappa-B activation (PubMed:24356957).</text>
</comment>
<comment type="PTM">
    <text evidence="39">(Microbial infection) Cleaved and inactivated by the proteases 3C of coxsackievirus A16 and human enterovirus D68, allowing the virus to disrupt TRAF6-triggered NF-kappa-B induction.</text>
</comment>
<comment type="PTM">
    <text evidence="31 32">(Microbial infection) Acetylation of Thr-184 and Thr-187 by Yersinia YopJ prevents phosphorylation and activation, thus blocking the MAPK signaling pathway.</text>
</comment>
<comment type="disease" evidence="36">
    <disease id="DI-04852">
        <name>Frontometaphyseal dysplasia 2</name>
        <acronym>FMD2</acronym>
        <description>A form of frontometaphyseal dysplasia, a progressive sclerosing skeletal dysplasia affecting the long bones and skull. Characteristic features include supraorbital hyperostosis, cranial hyperostosis, undermodeling of the small bones, flared metaphyses, and digital anomalies. Extra-skeletal manifestations include hearing loss, cardiac malformations, and stenosis, particularly of the upper airway and urinary tract. FMD2 inheritance is autosomal dominant.</description>
        <dbReference type="MIM" id="617137"/>
    </disease>
    <text>The disease is caused by variants affecting the gene represented in this entry.</text>
</comment>
<comment type="disease" evidence="37">
    <disease id="DI-04853">
        <name>Cardiospondylocarpofacial syndrome</name>
        <acronym>CSCF</acronym>
        <description>A syndrome characterized by growth retardation, dysmorphic facial features, brachydactyly with carpal-tarsal fusion and extensive posterior cervical vertebral synostosis, cardiac septal defects with valve dysplasia, and deafness with inner ear malformations. CSCF transmission pattern is consistent with autosomal dominant inheritance.</description>
        <dbReference type="MIM" id="157800"/>
    </disease>
    <text>The disease is caused by variants affecting the gene represented in this entry.</text>
</comment>
<comment type="similarity">
    <text evidence="51">Belongs to the protein kinase superfamily. STE Ser/Thr protein kinase family. MAP kinase kinase kinase subfamily.</text>
</comment>
<comment type="online information" name="Atlas of Genetics and Cytogenetics in Oncology and Haematology">
    <link uri="https://atlasgeneticsoncology.org/gene/454/MAP3K7"/>
</comment>
<gene>
    <name evidence="49 54" type="primary">MAP3K7</name>
    <name type="synonym">TAK1</name>
</gene>
<protein>
    <recommendedName>
        <fullName>Mitogen-activated protein kinase kinase kinase 7</fullName>
        <ecNumber evidence="6 8 13">2.7.11.25</ecNumber>
    </recommendedName>
    <alternativeName>
        <fullName>Transforming growth factor-beta-activated kinase 1</fullName>
        <shortName>TGF-beta-activated kinase 1</shortName>
    </alternativeName>
</protein>
<sequence>MSTASAASSSSSSSAGEMIEAPSQVLNFEEIDYKEIEVEEVVGRGAFGVVCKAKWRAKDVAIKQIESESERKAFIVELRQLSRVNHPNIVKLYGACLNPVCLVMEYAEGGSLYNVLHGAEPLPYYTAAHAMSWCLQCSQGVAYLHSMQPKALIHRDLKPPNLLLVAGGTVLKICDFGTACDIQTHMTNNKGSAAWMAPEVFEGSNYSEKCDVFSWGIILWEVITRRKPFDEIGGPAFRIMWAVHNGTRPPLIKNLPKPIESLMTRCWSKDPSQRPSMEEIVKIMTHLMRYFPGADEPLQYPCQYSDEGQSNSATSTGSFMDIASTNTSNKSDTNMEQVPATNDTIKRLESKLLKNQAKQQSESGRLSLGASRGSSVESLPPTSEGKRMSADMSEIEARIAATTAYSKPKRGHRKTASFGNILDVPEIVISGNGQPRRRSIQDLTVTGTEPGQVSSRSSSPSVRMITTSGPTSEKPTRSHPWTPDDSTDTNGSDNSIPMAYLTLDHQLQPLAPCPNSKESMAVFEQHCKMAQEYMKVQTEIALLLQRKQELVAELDQDEKDQQNTSRLVQEHKKLLDENKSLSTYYQQCKKQLEVIRSQQQKRQGTS</sequence>
<organism>
    <name type="scientific">Homo sapiens</name>
    <name type="common">Human</name>
    <dbReference type="NCBI Taxonomy" id="9606"/>
    <lineage>
        <taxon>Eukaryota</taxon>
        <taxon>Metazoa</taxon>
        <taxon>Chordata</taxon>
        <taxon>Craniata</taxon>
        <taxon>Vertebrata</taxon>
        <taxon>Euteleostomi</taxon>
        <taxon>Mammalia</taxon>
        <taxon>Eutheria</taxon>
        <taxon>Euarchontoglires</taxon>
        <taxon>Primates</taxon>
        <taxon>Haplorrhini</taxon>
        <taxon>Catarrhini</taxon>
        <taxon>Hominidae</taxon>
        <taxon>Homo</taxon>
    </lineage>
</organism>
<name>M3K7_HUMAN</name>
<proteinExistence type="evidence at protein level"/>
<evidence type="ECO:0000250" key="1"/>
<evidence type="ECO:0000250" key="2">
    <source>
        <dbReference type="UniProtKB" id="Q62073"/>
    </source>
</evidence>
<evidence type="ECO:0000255" key="3">
    <source>
        <dbReference type="PROSITE-ProRule" id="PRU00159"/>
    </source>
</evidence>
<evidence type="ECO:0000255" key="4">
    <source>
        <dbReference type="PROSITE-ProRule" id="PRU10027"/>
    </source>
</evidence>
<evidence type="ECO:0000256" key="5">
    <source>
        <dbReference type="SAM" id="MobiDB-lite"/>
    </source>
</evidence>
<evidence type="ECO:0000269" key="6">
    <source>
    </source>
</evidence>
<evidence type="ECO:0000269" key="7">
    <source>
    </source>
</evidence>
<evidence type="ECO:0000269" key="8">
    <source>
    </source>
</evidence>
<evidence type="ECO:0000269" key="9">
    <source>
    </source>
</evidence>
<evidence type="ECO:0000269" key="10">
    <source>
    </source>
</evidence>
<evidence type="ECO:0000269" key="11">
    <source>
    </source>
</evidence>
<evidence type="ECO:0000269" key="12">
    <source>
    </source>
</evidence>
<evidence type="ECO:0000269" key="13">
    <source>
    </source>
</evidence>
<evidence type="ECO:0000269" key="14">
    <source>
    </source>
</evidence>
<evidence type="ECO:0000269" key="15">
    <source>
    </source>
</evidence>
<evidence type="ECO:0000269" key="16">
    <source>
    </source>
</evidence>
<evidence type="ECO:0000269" key="17">
    <source>
    </source>
</evidence>
<evidence type="ECO:0000269" key="18">
    <source>
    </source>
</evidence>
<evidence type="ECO:0000269" key="19">
    <source>
    </source>
</evidence>
<evidence type="ECO:0000269" key="20">
    <source>
    </source>
</evidence>
<evidence type="ECO:0000269" key="21">
    <source>
    </source>
</evidence>
<evidence type="ECO:0000269" key="22">
    <source>
    </source>
</evidence>
<evidence type="ECO:0000269" key="23">
    <source>
    </source>
</evidence>
<evidence type="ECO:0000269" key="24">
    <source>
    </source>
</evidence>
<evidence type="ECO:0000269" key="25">
    <source>
    </source>
</evidence>
<evidence type="ECO:0000269" key="26">
    <source>
    </source>
</evidence>
<evidence type="ECO:0000269" key="27">
    <source>
    </source>
</evidence>
<evidence type="ECO:0000269" key="28">
    <source>
    </source>
</evidence>
<evidence type="ECO:0000269" key="29">
    <source>
    </source>
</evidence>
<evidence type="ECO:0000269" key="30">
    <source>
    </source>
</evidence>
<evidence type="ECO:0000269" key="31">
    <source>
    </source>
</evidence>
<evidence type="ECO:0000269" key="32">
    <source>
    </source>
</evidence>
<evidence type="ECO:0000269" key="33">
    <source>
    </source>
</evidence>
<evidence type="ECO:0000269" key="34">
    <source>
    </source>
</evidence>
<evidence type="ECO:0000269" key="35">
    <source>
    </source>
</evidence>
<evidence type="ECO:0000269" key="36">
    <source>
    </source>
</evidence>
<evidence type="ECO:0000269" key="37">
    <source>
    </source>
</evidence>
<evidence type="ECO:0000269" key="38">
    <source>
    </source>
</evidence>
<evidence type="ECO:0000269" key="39">
    <source>
    </source>
</evidence>
<evidence type="ECO:0000269" key="40">
    <source>
    </source>
</evidence>
<evidence type="ECO:0000269" key="41">
    <source>
    </source>
</evidence>
<evidence type="ECO:0000269" key="42">
    <source>
    </source>
</evidence>
<evidence type="ECO:0000269" key="43">
    <source>
    </source>
</evidence>
<evidence type="ECO:0000269" key="44">
    <source>
    </source>
</evidence>
<evidence type="ECO:0000269" key="45">
    <source>
    </source>
</evidence>
<evidence type="ECO:0000303" key="46">
    <source>
    </source>
</evidence>
<evidence type="ECO:0000303" key="47">
    <source>
    </source>
</evidence>
<evidence type="ECO:0000303" key="48">
    <source>
    </source>
</evidence>
<evidence type="ECO:0000303" key="49">
    <source>
    </source>
</evidence>
<evidence type="ECO:0000303" key="50">
    <source>
    </source>
</evidence>
<evidence type="ECO:0000305" key="51"/>
<evidence type="ECO:0000305" key="52">
    <source>
    </source>
</evidence>
<evidence type="ECO:0000305" key="53">
    <source>
    </source>
</evidence>
<evidence type="ECO:0000312" key="54">
    <source>
        <dbReference type="HGNC" id="HGNC:6859"/>
    </source>
</evidence>
<evidence type="ECO:0007744" key="55">
    <source>
    </source>
</evidence>
<evidence type="ECO:0007744" key="56">
    <source>
    </source>
</evidence>
<evidence type="ECO:0007744" key="57">
    <source>
    </source>
</evidence>
<evidence type="ECO:0007744" key="58">
    <source>
    </source>
</evidence>
<evidence type="ECO:0007744" key="59">
    <source>
    </source>
</evidence>
<evidence type="ECO:0007744" key="60">
    <source>
    </source>
</evidence>
<evidence type="ECO:0007744" key="61">
    <source>
    </source>
</evidence>
<evidence type="ECO:0007744" key="62">
    <source>
    </source>
</evidence>
<evidence type="ECO:0007744" key="63">
    <source>
    </source>
</evidence>
<evidence type="ECO:0007744" key="64">
    <source>
    </source>
</evidence>
<evidence type="ECO:0007829" key="65">
    <source>
        <dbReference type="PDB" id="5GJF"/>
    </source>
</evidence>
<evidence type="ECO:0007829" key="66">
    <source>
        <dbReference type="PDB" id="5JGA"/>
    </source>
</evidence>
<evidence type="ECO:0007829" key="67">
    <source>
        <dbReference type="PDB" id="7NTH"/>
    </source>
</evidence>
<dbReference type="EC" id="2.7.11.25" evidence="6 8 13"/>
<dbReference type="EMBL" id="AB009357">
    <property type="protein sequence ID" value="BAA25026.1"/>
    <property type="molecule type" value="mRNA"/>
</dbReference>
<dbReference type="EMBL" id="AB009356">
    <property type="protein sequence ID" value="BAA25025.1"/>
    <property type="molecule type" value="mRNA"/>
</dbReference>
<dbReference type="EMBL" id="AB009358">
    <property type="protein sequence ID" value="BAA25027.2"/>
    <property type="molecule type" value="mRNA"/>
</dbReference>
<dbReference type="EMBL" id="AF218074">
    <property type="protein sequence ID" value="AAF27652.1"/>
    <property type="molecule type" value="mRNA"/>
</dbReference>
<dbReference type="EMBL" id="DQ314875">
    <property type="protein sequence ID" value="ABC40734.1"/>
    <property type="molecule type" value="Genomic_DNA"/>
</dbReference>
<dbReference type="EMBL" id="AK315774">
    <property type="protein sequence ID" value="BAG38124.1"/>
    <property type="molecule type" value="mRNA"/>
</dbReference>
<dbReference type="EMBL" id="AL121964">
    <property type="status" value="NOT_ANNOTATED_CDS"/>
    <property type="molecule type" value="Genomic_DNA"/>
</dbReference>
<dbReference type="EMBL" id="AL121837">
    <property type="status" value="NOT_ANNOTATED_CDS"/>
    <property type="molecule type" value="Genomic_DNA"/>
</dbReference>
<dbReference type="EMBL" id="CH471051">
    <property type="protein sequence ID" value="EAW48525.1"/>
    <property type="molecule type" value="Genomic_DNA"/>
</dbReference>
<dbReference type="EMBL" id="CH471051">
    <property type="protein sequence ID" value="EAW48526.1"/>
    <property type="molecule type" value="Genomic_DNA"/>
</dbReference>
<dbReference type="EMBL" id="CH471051">
    <property type="protein sequence ID" value="EAW48527.1"/>
    <property type="molecule type" value="Genomic_DNA"/>
</dbReference>
<dbReference type="EMBL" id="CH471051">
    <property type="protein sequence ID" value="EAW48529.1"/>
    <property type="molecule type" value="Genomic_DNA"/>
</dbReference>
<dbReference type="EMBL" id="BC017715">
    <property type="protein sequence ID" value="AAH17715.1"/>
    <property type="molecule type" value="mRNA"/>
</dbReference>
<dbReference type="CCDS" id="CCDS5027.1">
    <molecule id="O43318-2"/>
</dbReference>
<dbReference type="CCDS" id="CCDS5028.1">
    <molecule id="O43318-1"/>
</dbReference>
<dbReference type="CCDS" id="CCDS5029.1">
    <molecule id="O43318-3"/>
</dbReference>
<dbReference type="CCDS" id="CCDS5030.1">
    <molecule id="O43318-4"/>
</dbReference>
<dbReference type="PIR" id="JC5955">
    <property type="entry name" value="JC5955"/>
</dbReference>
<dbReference type="PIR" id="JC5956">
    <property type="entry name" value="JC5956"/>
</dbReference>
<dbReference type="RefSeq" id="NP_003179.1">
    <molecule id="O43318-2"/>
    <property type="nucleotide sequence ID" value="NM_003188.4"/>
</dbReference>
<dbReference type="RefSeq" id="NP_663304.1">
    <molecule id="O43318-1"/>
    <property type="nucleotide sequence ID" value="NM_145331.3"/>
</dbReference>
<dbReference type="RefSeq" id="NP_663305.1">
    <molecule id="O43318-3"/>
    <property type="nucleotide sequence ID" value="NM_145332.3"/>
</dbReference>
<dbReference type="RefSeq" id="NP_663306.1">
    <molecule id="O43318-4"/>
    <property type="nucleotide sequence ID" value="NM_145333.3"/>
</dbReference>
<dbReference type="PDB" id="2EVA">
    <property type="method" value="X-ray"/>
    <property type="resolution" value="2.00 A"/>
    <property type="chains" value="A=31-303"/>
</dbReference>
<dbReference type="PDB" id="2YIY">
    <property type="method" value="X-ray"/>
    <property type="resolution" value="2.49 A"/>
    <property type="chains" value="A=31-303"/>
</dbReference>
<dbReference type="PDB" id="4GS6">
    <property type="method" value="X-ray"/>
    <property type="resolution" value="2.20 A"/>
    <property type="chains" value="A=31-303"/>
</dbReference>
<dbReference type="PDB" id="4L3P">
    <property type="method" value="X-ray"/>
    <property type="resolution" value="2.68 A"/>
    <property type="chains" value="A=31-303"/>
</dbReference>
<dbReference type="PDB" id="4L52">
    <property type="method" value="X-ray"/>
    <property type="resolution" value="2.54 A"/>
    <property type="chains" value="A=31-303"/>
</dbReference>
<dbReference type="PDB" id="4L53">
    <property type="method" value="X-ray"/>
    <property type="resolution" value="2.55 A"/>
    <property type="chains" value="A=31-303"/>
</dbReference>
<dbReference type="PDB" id="4O91">
    <property type="method" value="X-ray"/>
    <property type="resolution" value="2.39 A"/>
    <property type="chains" value="A=31-303"/>
</dbReference>
<dbReference type="PDB" id="5E7R">
    <property type="method" value="X-ray"/>
    <property type="resolution" value="2.11 A"/>
    <property type="chains" value="A=31-303"/>
</dbReference>
<dbReference type="PDB" id="5GJD">
    <property type="method" value="X-ray"/>
    <property type="resolution" value="2.79 A"/>
    <property type="chains" value="A=31-303"/>
</dbReference>
<dbReference type="PDB" id="5GJF">
    <property type="method" value="X-ray"/>
    <property type="resolution" value="2.89 A"/>
    <property type="chains" value="A=31-303"/>
</dbReference>
<dbReference type="PDB" id="5GJG">
    <property type="method" value="X-ray"/>
    <property type="resolution" value="2.61 A"/>
    <property type="chains" value="A=31-303"/>
</dbReference>
<dbReference type="PDB" id="5J7S">
    <property type="method" value="X-ray"/>
    <property type="resolution" value="2.37 A"/>
    <property type="chains" value="A=31-303"/>
</dbReference>
<dbReference type="PDB" id="5J8I">
    <property type="method" value="X-ray"/>
    <property type="resolution" value="2.40 A"/>
    <property type="chains" value="A=31-303"/>
</dbReference>
<dbReference type="PDB" id="5J9L">
    <property type="method" value="X-ray"/>
    <property type="resolution" value="2.75 A"/>
    <property type="chains" value="A=31-303"/>
</dbReference>
<dbReference type="PDB" id="5JGA">
    <property type="method" value="X-ray"/>
    <property type="resolution" value="2.00 A"/>
    <property type="chains" value="A=31-303"/>
</dbReference>
<dbReference type="PDB" id="5JGB">
    <property type="method" value="X-ray"/>
    <property type="resolution" value="2.80 A"/>
    <property type="chains" value="A=31-303"/>
</dbReference>
<dbReference type="PDB" id="5JGD">
    <property type="method" value="X-ray"/>
    <property type="resolution" value="3.10 A"/>
    <property type="chains" value="A=31-303"/>
</dbReference>
<dbReference type="PDB" id="5JH6">
    <property type="method" value="X-ray"/>
    <property type="resolution" value="2.37 A"/>
    <property type="chains" value="A=31-303"/>
</dbReference>
<dbReference type="PDB" id="5JK3">
    <property type="method" value="X-ray"/>
    <property type="resolution" value="2.37 A"/>
    <property type="chains" value="A=31-303"/>
</dbReference>
<dbReference type="PDB" id="5V5N">
    <property type="method" value="X-ray"/>
    <property type="resolution" value="2.01 A"/>
    <property type="chains" value="A=31-303"/>
</dbReference>
<dbReference type="PDB" id="7NTH">
    <property type="method" value="X-ray"/>
    <property type="resolution" value="1.97 A"/>
    <property type="chains" value="A=31-303"/>
</dbReference>
<dbReference type="PDB" id="7NTI">
    <property type="method" value="X-ray"/>
    <property type="resolution" value="1.98 A"/>
    <property type="chains" value="A=31-303"/>
</dbReference>
<dbReference type="PDB" id="8GW3">
    <property type="method" value="X-ray"/>
    <property type="resolution" value="2.05 A"/>
    <property type="chains" value="A/B/C/D=15-303"/>
</dbReference>
<dbReference type="PDB" id="9FPD">
    <property type="method" value="X-ray"/>
    <property type="resolution" value="2.40 A"/>
    <property type="chains" value="A=31-303"/>
</dbReference>
<dbReference type="PDBsum" id="2EVA"/>
<dbReference type="PDBsum" id="2YIY"/>
<dbReference type="PDBsum" id="4GS6"/>
<dbReference type="PDBsum" id="4L3P"/>
<dbReference type="PDBsum" id="4L52"/>
<dbReference type="PDBsum" id="4L53"/>
<dbReference type="PDBsum" id="4O91"/>
<dbReference type="PDBsum" id="5E7R"/>
<dbReference type="PDBsum" id="5GJD"/>
<dbReference type="PDBsum" id="5GJF"/>
<dbReference type="PDBsum" id="5GJG"/>
<dbReference type="PDBsum" id="5J7S"/>
<dbReference type="PDBsum" id="5J8I"/>
<dbReference type="PDBsum" id="5J9L"/>
<dbReference type="PDBsum" id="5JGA"/>
<dbReference type="PDBsum" id="5JGB"/>
<dbReference type="PDBsum" id="5JGD"/>
<dbReference type="PDBsum" id="5JH6"/>
<dbReference type="PDBsum" id="5JK3"/>
<dbReference type="PDBsum" id="5V5N"/>
<dbReference type="PDBsum" id="7NTH"/>
<dbReference type="PDBsum" id="7NTI"/>
<dbReference type="PDBsum" id="8GW3"/>
<dbReference type="PDBsum" id="9FPD"/>
<dbReference type="SMR" id="O43318"/>
<dbReference type="BioGRID" id="112748">
    <property type="interactions" value="393"/>
</dbReference>
<dbReference type="ComplexPortal" id="CPX-25729">
    <property type="entry name" value="TAK1-TAB complex, TAB2 variant"/>
</dbReference>
<dbReference type="ComplexPortal" id="CPX-25730">
    <property type="entry name" value="TAK1-TAB complex, TAB3 variant"/>
</dbReference>
<dbReference type="CORUM" id="O43318"/>
<dbReference type="DIP" id="DIP-27523N"/>
<dbReference type="FunCoup" id="O43318">
    <property type="interactions" value="5187"/>
</dbReference>
<dbReference type="IntAct" id="O43318">
    <property type="interactions" value="202"/>
</dbReference>
<dbReference type="MINT" id="O43318"/>
<dbReference type="STRING" id="9606.ENSP00000358335"/>
<dbReference type="BindingDB" id="O43318"/>
<dbReference type="ChEMBL" id="CHEMBL5776"/>
<dbReference type="DrugCentral" id="O43318"/>
<dbReference type="GuidetoPHARMACOLOGY" id="2082"/>
<dbReference type="MoonDB" id="O43318">
    <property type="type" value="Predicted"/>
</dbReference>
<dbReference type="GlyCosmos" id="O43318">
    <property type="glycosylation" value="2 sites, 1 glycan"/>
</dbReference>
<dbReference type="GlyGen" id="O43318">
    <property type="glycosylation" value="7 sites, 1 N-linked glycan (1 site), 1 O-linked glycan (3 sites)"/>
</dbReference>
<dbReference type="iPTMnet" id="O43318"/>
<dbReference type="MetOSite" id="O43318"/>
<dbReference type="PhosphoSitePlus" id="O43318"/>
<dbReference type="BioMuta" id="MAP3K7"/>
<dbReference type="CPTAC" id="CPTAC-1048"/>
<dbReference type="CPTAC" id="CPTAC-2812"/>
<dbReference type="CPTAC" id="CPTAC-3093"/>
<dbReference type="CPTAC" id="CPTAC-853"/>
<dbReference type="CPTAC" id="CPTAC-854"/>
<dbReference type="CPTAC" id="CPTAC-855"/>
<dbReference type="CPTAC" id="CPTAC-856"/>
<dbReference type="jPOST" id="O43318"/>
<dbReference type="MassIVE" id="O43318"/>
<dbReference type="PaxDb" id="9606-ENSP00000358335"/>
<dbReference type="PeptideAtlas" id="O43318"/>
<dbReference type="ProteomicsDB" id="48898">
    <molecule id="O43318-1"/>
</dbReference>
<dbReference type="ProteomicsDB" id="48899">
    <molecule id="O43318-2"/>
</dbReference>
<dbReference type="ProteomicsDB" id="48900">
    <molecule id="O43318-3"/>
</dbReference>
<dbReference type="ProteomicsDB" id="48901">
    <molecule id="O43318-4"/>
</dbReference>
<dbReference type="Pumba" id="O43318"/>
<dbReference type="Antibodypedia" id="2078">
    <property type="antibodies" value="1194 antibodies from 45 providers"/>
</dbReference>
<dbReference type="DNASU" id="6885"/>
<dbReference type="Ensembl" id="ENST00000369325.7">
    <molecule id="O43318-3"/>
    <property type="protein sequence ID" value="ENSP00000358331.3"/>
    <property type="gene ID" value="ENSG00000135341.19"/>
</dbReference>
<dbReference type="Ensembl" id="ENST00000369327.7">
    <molecule id="O43318-4"/>
    <property type="protein sequence ID" value="ENSP00000358333.3"/>
    <property type="gene ID" value="ENSG00000135341.19"/>
</dbReference>
<dbReference type="Ensembl" id="ENST00000369329.8">
    <molecule id="O43318-1"/>
    <property type="protein sequence ID" value="ENSP00000358335.3"/>
    <property type="gene ID" value="ENSG00000135341.19"/>
</dbReference>
<dbReference type="Ensembl" id="ENST00000369332.7">
    <molecule id="O43318-2"/>
    <property type="protein sequence ID" value="ENSP00000358338.3"/>
    <property type="gene ID" value="ENSG00000135341.19"/>
</dbReference>
<dbReference type="Ensembl" id="ENST00000700580.1">
    <molecule id="O43318-2"/>
    <property type="protein sequence ID" value="ENSP00000515074.1"/>
    <property type="gene ID" value="ENSG00000135341.19"/>
</dbReference>
<dbReference type="GeneID" id="6885"/>
<dbReference type="KEGG" id="hsa:6885"/>
<dbReference type="MANE-Select" id="ENST00000369329.8">
    <property type="protein sequence ID" value="ENSP00000358335.3"/>
    <property type="RefSeq nucleotide sequence ID" value="NM_145331.3"/>
    <property type="RefSeq protein sequence ID" value="NP_663304.1"/>
</dbReference>
<dbReference type="UCSC" id="uc003pnz.3">
    <molecule id="O43318-1"/>
    <property type="organism name" value="human"/>
</dbReference>
<dbReference type="AGR" id="HGNC:6859"/>
<dbReference type="CTD" id="6885"/>
<dbReference type="DisGeNET" id="6885"/>
<dbReference type="GeneCards" id="MAP3K7"/>
<dbReference type="HGNC" id="HGNC:6859">
    <property type="gene designation" value="MAP3K7"/>
</dbReference>
<dbReference type="HPA" id="ENSG00000135341">
    <property type="expression patterns" value="Low tissue specificity"/>
</dbReference>
<dbReference type="MalaCards" id="MAP3K7"/>
<dbReference type="MIM" id="157800">
    <property type="type" value="phenotype"/>
</dbReference>
<dbReference type="MIM" id="602614">
    <property type="type" value="gene"/>
</dbReference>
<dbReference type="MIM" id="617137">
    <property type="type" value="phenotype"/>
</dbReference>
<dbReference type="neXtProt" id="NX_O43318"/>
<dbReference type="OpenTargets" id="ENSG00000135341"/>
<dbReference type="Orphanet" id="3238">
    <property type="disease" value="Cardiospondylocarpofacial syndrome"/>
</dbReference>
<dbReference type="Orphanet" id="1826">
    <property type="disease" value="Frontometaphyseal dysplasia"/>
</dbReference>
<dbReference type="PharmGKB" id="PA30603"/>
<dbReference type="VEuPathDB" id="HostDB:ENSG00000135341"/>
<dbReference type="eggNOG" id="KOG0192">
    <property type="taxonomic scope" value="Eukaryota"/>
</dbReference>
<dbReference type="GeneTree" id="ENSGT00940000157785"/>
<dbReference type="HOGENOM" id="CLU_000288_7_41_1"/>
<dbReference type="InParanoid" id="O43318"/>
<dbReference type="OMA" id="ARTQCFA"/>
<dbReference type="OrthoDB" id="10261027at2759"/>
<dbReference type="PAN-GO" id="O43318">
    <property type="GO annotations" value="3 GO annotations based on evolutionary models"/>
</dbReference>
<dbReference type="PhylomeDB" id="O43318"/>
<dbReference type="TreeFam" id="TF105116"/>
<dbReference type="PathwayCommons" id="O43318"/>
<dbReference type="Reactome" id="R-HSA-1169091">
    <property type="pathway name" value="Activation of NF-kappaB in B cells"/>
</dbReference>
<dbReference type="Reactome" id="R-HSA-168638">
    <property type="pathway name" value="NOD1/2 Signaling Pathway"/>
</dbReference>
<dbReference type="Reactome" id="R-HSA-202424">
    <property type="pathway name" value="Downstream TCR signaling"/>
</dbReference>
<dbReference type="Reactome" id="R-HSA-2871837">
    <property type="pathway name" value="FCERI mediated NF-kB activation"/>
</dbReference>
<dbReference type="Reactome" id="R-HSA-4086398">
    <property type="pathway name" value="Ca2+ pathway"/>
</dbReference>
<dbReference type="Reactome" id="R-HSA-445989">
    <property type="pathway name" value="TAK1-dependent IKK and NF-kappa-B activation"/>
</dbReference>
<dbReference type="Reactome" id="R-HSA-450302">
    <property type="pathway name" value="activated TAK1 mediates p38 MAPK activation"/>
</dbReference>
<dbReference type="Reactome" id="R-HSA-450321">
    <property type="pathway name" value="JNK (c-Jun kinases) phosphorylation and activation mediated by activated human TAK1"/>
</dbReference>
<dbReference type="Reactome" id="R-HSA-5357956">
    <property type="pathway name" value="TNFR1-induced NF-kappa-B signaling pathway"/>
</dbReference>
<dbReference type="Reactome" id="R-HSA-5607764">
    <property type="pathway name" value="CLEC7A (Dectin-1) signaling"/>
</dbReference>
<dbReference type="Reactome" id="R-HSA-5689880">
    <property type="pathway name" value="Ub-specific processing proteases"/>
</dbReference>
<dbReference type="Reactome" id="R-HSA-9014325">
    <property type="pathway name" value="TICAM1,TRAF6-dependent induction of TAK1 complex"/>
</dbReference>
<dbReference type="Reactome" id="R-HSA-9020702">
    <property type="pathway name" value="Interleukin-1 signaling"/>
</dbReference>
<dbReference type="Reactome" id="R-HSA-937042">
    <property type="pathway name" value="IRAK2 mediated activation of TAK1 complex"/>
</dbReference>
<dbReference type="Reactome" id="R-HSA-937072">
    <property type="pathway name" value="TRAF6-mediated induction of TAK1 complex within TLR4 complex"/>
</dbReference>
<dbReference type="Reactome" id="R-HSA-9645460">
    <property type="pathway name" value="Alpha-protein kinase 1 signaling pathway"/>
</dbReference>
<dbReference type="Reactome" id="R-HSA-9705671">
    <property type="pathway name" value="SARS-CoV-2 activates/modulates innate and adaptive immune responses"/>
</dbReference>
<dbReference type="Reactome" id="R-HSA-975163">
    <property type="pathway name" value="IRAK2 mediated activation of TAK1 complex upon TLR7/8 or 9 stimulation"/>
</dbReference>
<dbReference type="SignaLink" id="O43318"/>
<dbReference type="SIGNOR" id="O43318"/>
<dbReference type="BioGRID-ORCS" id="6885">
    <property type="hits" value="140 hits in 1201 CRISPR screens"/>
</dbReference>
<dbReference type="ChiTaRS" id="MAP3K7">
    <property type="organism name" value="human"/>
</dbReference>
<dbReference type="EvolutionaryTrace" id="O43318"/>
<dbReference type="GeneWiki" id="MAP3K7"/>
<dbReference type="GenomeRNAi" id="6885"/>
<dbReference type="Pharos" id="O43318">
    <property type="development level" value="Tchem"/>
</dbReference>
<dbReference type="PRO" id="PR:O43318"/>
<dbReference type="Proteomes" id="UP000005640">
    <property type="component" value="Chromosome 6"/>
</dbReference>
<dbReference type="RNAct" id="O43318">
    <property type="molecule type" value="protein"/>
</dbReference>
<dbReference type="Bgee" id="ENSG00000135341">
    <property type="expression patterns" value="Expressed in tendon of biceps brachii and 206 other cell types or tissues"/>
</dbReference>
<dbReference type="ExpressionAtlas" id="O43318">
    <property type="expression patterns" value="baseline and differential"/>
</dbReference>
<dbReference type="GO" id="GO:0140672">
    <property type="term" value="C:ATAC complex"/>
    <property type="evidence" value="ECO:0000314"/>
    <property type="project" value="BHF-UCL"/>
</dbReference>
<dbReference type="GO" id="GO:0005737">
    <property type="term" value="C:cytoplasm"/>
    <property type="evidence" value="ECO:0000314"/>
    <property type="project" value="UniProt"/>
</dbReference>
<dbReference type="GO" id="GO:0005829">
    <property type="term" value="C:cytosol"/>
    <property type="evidence" value="ECO:0000314"/>
    <property type="project" value="HPA"/>
</dbReference>
<dbReference type="GO" id="GO:0005789">
    <property type="term" value="C:endoplasmic reticulum membrane"/>
    <property type="evidence" value="ECO:0000314"/>
    <property type="project" value="UniProt"/>
</dbReference>
<dbReference type="GO" id="GO:0010008">
    <property type="term" value="C:endosome membrane"/>
    <property type="evidence" value="ECO:0000304"/>
    <property type="project" value="Reactome"/>
</dbReference>
<dbReference type="GO" id="GO:0005634">
    <property type="term" value="C:nucleus"/>
    <property type="evidence" value="ECO:0007005"/>
    <property type="project" value="UniProtKB"/>
</dbReference>
<dbReference type="GO" id="GO:0005886">
    <property type="term" value="C:plasma membrane"/>
    <property type="evidence" value="ECO:0000314"/>
    <property type="project" value="HPA"/>
</dbReference>
<dbReference type="GO" id="GO:0005524">
    <property type="term" value="F:ATP binding"/>
    <property type="evidence" value="ECO:0007669"/>
    <property type="project" value="UniProtKB-KW"/>
</dbReference>
<dbReference type="GO" id="GO:0140297">
    <property type="term" value="F:DNA-binding transcription factor binding"/>
    <property type="evidence" value="ECO:0007669"/>
    <property type="project" value="Ensembl"/>
</dbReference>
<dbReference type="GO" id="GO:0035173">
    <property type="term" value="F:histone kinase activity"/>
    <property type="evidence" value="ECO:0007669"/>
    <property type="project" value="Ensembl"/>
</dbReference>
<dbReference type="GO" id="GO:0042802">
    <property type="term" value="F:identical protein binding"/>
    <property type="evidence" value="ECO:0000353"/>
    <property type="project" value="UniProtKB"/>
</dbReference>
<dbReference type="GO" id="GO:1990450">
    <property type="term" value="F:linear polyubiquitin binding"/>
    <property type="evidence" value="ECO:0000314"/>
    <property type="project" value="UniProt"/>
</dbReference>
<dbReference type="GO" id="GO:0000287">
    <property type="term" value="F:magnesium ion binding"/>
    <property type="evidence" value="ECO:0007669"/>
    <property type="project" value="InterPro"/>
</dbReference>
<dbReference type="GO" id="GO:0004707">
    <property type="term" value="F:MAP kinase activity"/>
    <property type="evidence" value="ECO:0000314"/>
    <property type="project" value="UniProtKB"/>
</dbReference>
<dbReference type="GO" id="GO:0004709">
    <property type="term" value="F:MAP kinase kinase kinase activity"/>
    <property type="evidence" value="ECO:0000314"/>
    <property type="project" value="UniProtKB"/>
</dbReference>
<dbReference type="GO" id="GO:0008349">
    <property type="term" value="F:MAP kinase kinase kinase kinase activity"/>
    <property type="evidence" value="ECO:0000304"/>
    <property type="project" value="Reactome"/>
</dbReference>
<dbReference type="GO" id="GO:0106310">
    <property type="term" value="F:protein serine kinase activity"/>
    <property type="evidence" value="ECO:0007669"/>
    <property type="project" value="RHEA"/>
</dbReference>
<dbReference type="GO" id="GO:0004674">
    <property type="term" value="F:protein serine/threonine kinase activity"/>
    <property type="evidence" value="ECO:0000314"/>
    <property type="project" value="UniProt"/>
</dbReference>
<dbReference type="GO" id="GO:0120283">
    <property type="term" value="F:protein serine/threonine kinase binding"/>
    <property type="evidence" value="ECO:0007669"/>
    <property type="project" value="Ensembl"/>
</dbReference>
<dbReference type="GO" id="GO:0030971">
    <property type="term" value="F:receptor tyrosine kinase binding"/>
    <property type="evidence" value="ECO:0000353"/>
    <property type="project" value="WormBase"/>
</dbReference>
<dbReference type="GO" id="GO:0097110">
    <property type="term" value="F:scaffold protein binding"/>
    <property type="evidence" value="ECO:0000314"/>
    <property type="project" value="MGI"/>
</dbReference>
<dbReference type="GO" id="GO:0001223">
    <property type="term" value="F:transcription coactivator binding"/>
    <property type="evidence" value="ECO:0007669"/>
    <property type="project" value="Ensembl"/>
</dbReference>
<dbReference type="GO" id="GO:0005114">
    <property type="term" value="F:type II transforming growth factor beta receptor binding"/>
    <property type="evidence" value="ECO:0007669"/>
    <property type="project" value="Ensembl"/>
</dbReference>
<dbReference type="GO" id="GO:0031625">
    <property type="term" value="F:ubiquitin protein ligase binding"/>
    <property type="evidence" value="ECO:0007669"/>
    <property type="project" value="Ensembl"/>
</dbReference>
<dbReference type="GO" id="GO:0043276">
    <property type="term" value="P:anoikis"/>
    <property type="evidence" value="ECO:0000250"/>
    <property type="project" value="BHF-UCL"/>
</dbReference>
<dbReference type="GO" id="GO:0007249">
    <property type="term" value="P:canonical NF-kappaB signal transduction"/>
    <property type="evidence" value="ECO:0000314"/>
    <property type="project" value="UniProt"/>
</dbReference>
<dbReference type="GO" id="GO:1904385">
    <property type="term" value="P:cellular response to angiotensin"/>
    <property type="evidence" value="ECO:0007669"/>
    <property type="project" value="Ensembl"/>
</dbReference>
<dbReference type="GO" id="GO:0071456">
    <property type="term" value="P:cellular response to hypoxia"/>
    <property type="evidence" value="ECO:0007669"/>
    <property type="project" value="Ensembl"/>
</dbReference>
<dbReference type="GO" id="GO:0071356">
    <property type="term" value="P:cellular response to tumor necrosis factor"/>
    <property type="evidence" value="ECO:0007669"/>
    <property type="project" value="Ensembl"/>
</dbReference>
<dbReference type="GO" id="GO:0002753">
    <property type="term" value="P:cytoplasmic pattern recognition receptor signaling pathway"/>
    <property type="evidence" value="ECO:0000304"/>
    <property type="project" value="Reactome"/>
</dbReference>
<dbReference type="GO" id="GO:0042742">
    <property type="term" value="P:defense response to bacterium"/>
    <property type="evidence" value="ECO:0000314"/>
    <property type="project" value="UniProt"/>
</dbReference>
<dbReference type="GO" id="GO:0038095">
    <property type="term" value="P:Fc-epsilon receptor signaling pathway"/>
    <property type="evidence" value="ECO:0000304"/>
    <property type="project" value="Reactome"/>
</dbReference>
<dbReference type="GO" id="GO:0007252">
    <property type="term" value="P:I-kappaB phosphorylation"/>
    <property type="evidence" value="ECO:0000314"/>
    <property type="project" value="UniProtKB"/>
</dbReference>
<dbReference type="GO" id="GO:0006955">
    <property type="term" value="P:immune response"/>
    <property type="evidence" value="ECO:0000318"/>
    <property type="project" value="GO_Central"/>
</dbReference>
<dbReference type="GO" id="GO:0006954">
    <property type="term" value="P:inflammatory response"/>
    <property type="evidence" value="ECO:0000314"/>
    <property type="project" value="UniProt"/>
</dbReference>
<dbReference type="GO" id="GO:0070498">
    <property type="term" value="P:interleukin-1-mediated signaling pathway"/>
    <property type="evidence" value="ECO:0000315"/>
    <property type="project" value="GO_Central"/>
</dbReference>
<dbReference type="GO" id="GO:0038173">
    <property type="term" value="P:interleukin-17A-mediated signaling pathway"/>
    <property type="evidence" value="ECO:0000314"/>
    <property type="project" value="UniProt"/>
</dbReference>
<dbReference type="GO" id="GO:0038172">
    <property type="term" value="P:interleukin-33-mediated signaling pathway"/>
    <property type="evidence" value="ECO:0000314"/>
    <property type="project" value="UniProt"/>
</dbReference>
<dbReference type="GO" id="GO:0007254">
    <property type="term" value="P:JNK cascade"/>
    <property type="evidence" value="ECO:0000314"/>
    <property type="project" value="UniProtKB"/>
</dbReference>
<dbReference type="GO" id="GO:0000165">
    <property type="term" value="P:MAPK cascade"/>
    <property type="evidence" value="ECO:0000314"/>
    <property type="project" value="UniProtKB"/>
</dbReference>
<dbReference type="GO" id="GO:0002755">
    <property type="term" value="P:MyD88-dependent toll-like receptor signaling pathway"/>
    <property type="evidence" value="ECO:0000304"/>
    <property type="project" value="Reactome"/>
</dbReference>
<dbReference type="GO" id="GO:0010629">
    <property type="term" value="P:negative regulation of gene expression"/>
    <property type="evidence" value="ECO:0007669"/>
    <property type="project" value="Ensembl"/>
</dbReference>
<dbReference type="GO" id="GO:0035872">
    <property type="term" value="P:nucleotide-binding domain, leucine rich repeat containing receptor signaling pathway"/>
    <property type="evidence" value="ECO:0000304"/>
    <property type="project" value="Reactome"/>
</dbReference>
<dbReference type="GO" id="GO:0038066">
    <property type="term" value="P:p38MAPK cascade"/>
    <property type="evidence" value="ECO:0000314"/>
    <property type="project" value="UniProt"/>
</dbReference>
<dbReference type="GO" id="GO:0043123">
    <property type="term" value="P:positive regulation of canonical NF-kappaB signal transduction"/>
    <property type="evidence" value="ECO:0000314"/>
    <property type="project" value="UniProt"/>
</dbReference>
<dbReference type="GO" id="GO:0045787">
    <property type="term" value="P:positive regulation of cell cycle"/>
    <property type="evidence" value="ECO:0007669"/>
    <property type="project" value="Ensembl"/>
</dbReference>
<dbReference type="GO" id="GO:0045793">
    <property type="term" value="P:positive regulation of cell size"/>
    <property type="evidence" value="ECO:0007669"/>
    <property type="project" value="Ensembl"/>
</dbReference>
<dbReference type="GO" id="GO:0141111">
    <property type="term" value="P:positive regulation of cGAS/STING signaling pathway"/>
    <property type="evidence" value="ECO:0000314"/>
    <property type="project" value="UniProt"/>
</dbReference>
<dbReference type="GO" id="GO:0032743">
    <property type="term" value="P:positive regulation of interleukin-2 production"/>
    <property type="evidence" value="ECO:0000315"/>
    <property type="project" value="UniProtKB"/>
</dbReference>
<dbReference type="GO" id="GO:0043507">
    <property type="term" value="P:positive regulation of JUN kinase activity"/>
    <property type="evidence" value="ECO:0000314"/>
    <property type="project" value="UniProtKB"/>
</dbReference>
<dbReference type="GO" id="GO:0016239">
    <property type="term" value="P:positive regulation of macroautophagy"/>
    <property type="evidence" value="ECO:0000250"/>
    <property type="project" value="BHF-UCL"/>
</dbReference>
<dbReference type="GO" id="GO:1901224">
    <property type="term" value="P:positive regulation of non-canonical NF-kappaB signal transduction"/>
    <property type="evidence" value="ECO:0000315"/>
    <property type="project" value="UniProtKB"/>
</dbReference>
<dbReference type="GO" id="GO:0002726">
    <property type="term" value="P:positive regulation of T cell cytokine production"/>
    <property type="evidence" value="ECO:0000315"/>
    <property type="project" value="UniProtKB"/>
</dbReference>
<dbReference type="GO" id="GO:1904754">
    <property type="term" value="P:positive regulation of vascular associated smooth muscle cell migration"/>
    <property type="evidence" value="ECO:0007669"/>
    <property type="project" value="Ensembl"/>
</dbReference>
<dbReference type="GO" id="GO:1904707">
    <property type="term" value="P:positive regulation of vascular associated smooth muscle cell proliferation"/>
    <property type="evidence" value="ECO:0007669"/>
    <property type="project" value="Ensembl"/>
</dbReference>
<dbReference type="GO" id="GO:0002223">
    <property type="term" value="P:stimulatory C-type lectin receptor signaling pathway"/>
    <property type="evidence" value="ECO:0000304"/>
    <property type="project" value="Reactome"/>
</dbReference>
<dbReference type="GO" id="GO:0051403">
    <property type="term" value="P:stress-activated MAPK cascade"/>
    <property type="evidence" value="ECO:0000314"/>
    <property type="project" value="UniProtKB"/>
</dbReference>
<dbReference type="GO" id="GO:0050852">
    <property type="term" value="P:T cell receptor signaling pathway"/>
    <property type="evidence" value="ECO:0000304"/>
    <property type="project" value="Reactome"/>
</dbReference>
<dbReference type="GO" id="GO:0034138">
    <property type="term" value="P:toll-like receptor 3 signaling pathway"/>
    <property type="evidence" value="ECO:0000304"/>
    <property type="project" value="Reactome"/>
</dbReference>
<dbReference type="GO" id="GO:0034142">
    <property type="term" value="P:toll-like receptor 4 signaling pathway"/>
    <property type="evidence" value="ECO:0000314"/>
    <property type="project" value="UniProt"/>
</dbReference>
<dbReference type="GO" id="GO:0007179">
    <property type="term" value="P:transforming growth factor beta receptor signaling pathway"/>
    <property type="evidence" value="ECO:0000304"/>
    <property type="project" value="ProtInc"/>
</dbReference>
<dbReference type="GO" id="GO:0035666">
    <property type="term" value="P:TRIF-dependent toll-like receptor signaling pathway"/>
    <property type="evidence" value="ECO:0000304"/>
    <property type="project" value="Reactome"/>
</dbReference>
<dbReference type="CDD" id="cd14058">
    <property type="entry name" value="STKc_TAK1"/>
    <property type="match status" value="1"/>
</dbReference>
<dbReference type="FunFam" id="1.10.510.10:FF:000143">
    <property type="entry name" value="Mitogen-activated protein kinase kinase kinase 7"/>
    <property type="match status" value="1"/>
</dbReference>
<dbReference type="FunFam" id="3.30.200.20:FF:000152">
    <property type="entry name" value="Mitogen-activated protein kinase kinase kinase 7"/>
    <property type="match status" value="1"/>
</dbReference>
<dbReference type="Gene3D" id="3.30.200.20">
    <property type="entry name" value="Phosphorylase Kinase, domain 1"/>
    <property type="match status" value="1"/>
</dbReference>
<dbReference type="Gene3D" id="1.10.510.10">
    <property type="entry name" value="Transferase(Phosphotransferase) domain 1"/>
    <property type="match status" value="1"/>
</dbReference>
<dbReference type="InterPro" id="IPR011009">
    <property type="entry name" value="Kinase-like_dom_sf"/>
</dbReference>
<dbReference type="InterPro" id="IPR049637">
    <property type="entry name" value="MAP3K7"/>
</dbReference>
<dbReference type="InterPro" id="IPR000719">
    <property type="entry name" value="Prot_kinase_dom"/>
</dbReference>
<dbReference type="InterPro" id="IPR017441">
    <property type="entry name" value="Protein_kinase_ATP_BS"/>
</dbReference>
<dbReference type="InterPro" id="IPR001245">
    <property type="entry name" value="Ser-Thr/Tyr_kinase_cat_dom"/>
</dbReference>
<dbReference type="InterPro" id="IPR008271">
    <property type="entry name" value="Ser/Thr_kinase_AS"/>
</dbReference>
<dbReference type="PANTHER" id="PTHR46716">
    <property type="entry name" value="MITOGEN-ACTIVATED PROTEIN KINASE KINASE KINASE 7"/>
    <property type="match status" value="1"/>
</dbReference>
<dbReference type="PANTHER" id="PTHR46716:SF1">
    <property type="entry name" value="MITOGEN-ACTIVATED PROTEIN KINASE KINASE KINASE 7"/>
    <property type="match status" value="1"/>
</dbReference>
<dbReference type="Pfam" id="PF07714">
    <property type="entry name" value="PK_Tyr_Ser-Thr"/>
    <property type="match status" value="1"/>
</dbReference>
<dbReference type="PIRSF" id="PIRSF038168">
    <property type="entry name" value="MAPKKK7"/>
    <property type="match status" value="1"/>
</dbReference>
<dbReference type="PRINTS" id="PR00109">
    <property type="entry name" value="TYRKINASE"/>
</dbReference>
<dbReference type="SMART" id="SM00220">
    <property type="entry name" value="S_TKc"/>
    <property type="match status" value="1"/>
</dbReference>
<dbReference type="SUPFAM" id="SSF56112">
    <property type="entry name" value="Protein kinase-like (PK-like)"/>
    <property type="match status" value="1"/>
</dbReference>
<dbReference type="PROSITE" id="PS00107">
    <property type="entry name" value="PROTEIN_KINASE_ATP"/>
    <property type="match status" value="1"/>
</dbReference>
<dbReference type="PROSITE" id="PS50011">
    <property type="entry name" value="PROTEIN_KINASE_DOM"/>
    <property type="match status" value="1"/>
</dbReference>
<dbReference type="PROSITE" id="PS00108">
    <property type="entry name" value="PROTEIN_KINASE_ST"/>
    <property type="match status" value="1"/>
</dbReference>
<keyword id="KW-0002">3D-structure</keyword>
<keyword id="KW-0007">Acetylation</keyword>
<keyword id="KW-0025">Alternative splicing</keyword>
<keyword id="KW-0053">Apoptosis</keyword>
<keyword id="KW-0067">ATP-binding</keyword>
<keyword id="KW-1003">Cell membrane</keyword>
<keyword id="KW-0963">Cytoplasm</keyword>
<keyword id="KW-0225">Disease variant</keyword>
<keyword id="KW-0945">Host-virus interaction</keyword>
<keyword id="KW-1017">Isopeptide bond</keyword>
<keyword id="KW-0418">Kinase</keyword>
<keyword id="KW-0460">Magnesium</keyword>
<keyword id="KW-0472">Membrane</keyword>
<keyword id="KW-0479">Metal-binding</keyword>
<keyword id="KW-0547">Nucleotide-binding</keyword>
<keyword id="KW-0597">Phosphoprotein</keyword>
<keyword id="KW-1267">Proteomics identification</keyword>
<keyword id="KW-1185">Reference proteome</keyword>
<keyword id="KW-0723">Serine/threonine-protein kinase</keyword>
<keyword id="KW-0346">Stress response</keyword>
<keyword id="KW-0804">Transcription</keyword>
<keyword id="KW-0805">Transcription regulation</keyword>
<keyword id="KW-0808">Transferase</keyword>
<keyword id="KW-0832">Ubl conjugation</keyword>